<reference key="1">
    <citation type="journal article" date="1998" name="Science">
        <title>Mutation of a gene encoding a protein with extracellular matrix motifs in Usher syndrome type IIa.</title>
        <authorList>
            <person name="Eudy J.D."/>
            <person name="Weston M.D."/>
            <person name="Yao S.F."/>
            <person name="Hoover D.M."/>
            <person name="Rehm H.L."/>
            <person name="Ahmad I."/>
            <person name="Ma-Edmonds M."/>
            <person name="Yan D."/>
            <person name="Cheng J.J."/>
            <person name="Beisel K.W."/>
            <person name="Ayuso C."/>
            <person name="Cremers C."/>
            <person name="Davenport S."/>
            <person name="Moller C."/>
            <person name="Talmadge C.B."/>
            <person name="Tamayo M."/>
            <person name="Swaroop A."/>
            <person name="Morton C.C."/>
            <person name="Kimberling W.J."/>
            <person name="Sumegi J."/>
        </authorList>
    </citation>
    <scope>NUCLEOTIDE SEQUENCE [MRNA] (ISOFORM 2)</scope>
    <scope>INVOLVEMENT IN USH2A</scope>
    <scope>TISSUE SPECIFICITY</scope>
    <scope>VARIANTS SER-479 AND LYS-1486</scope>
</reference>
<reference key="2">
    <citation type="journal article" date="2000" name="Am. J. Hum. Genet.">
        <title>Genomic structure and identification of novel mutations in usherin, the gene responsible for Usher syndrome type IIa.</title>
        <authorList>
            <person name="Weston M.D."/>
            <person name="Eudy J.D."/>
            <person name="Fugita S."/>
            <person name="Yao S.-F."/>
            <person name="Usami S."/>
            <person name="Cremers C."/>
            <person name="Greenberg J."/>
            <person name="Ramesar R."/>
            <person name="Martini A."/>
            <person name="Moller C."/>
            <person name="Smith R.J."/>
            <person name="Sumegi J."/>
            <person name="Kimberling W.J."/>
        </authorList>
    </citation>
    <scope>NUCLEOTIDE SEQUENCE [GENOMIC DNA]</scope>
    <scope>INVOLVEMENT IN USH2A</scope>
    <scope>VARIANT LYS-1486</scope>
    <scope>VARIANTS USH2A TYR-319; HIS-346 AND PHE-419</scope>
</reference>
<reference key="3">
    <citation type="journal article" date="2000" name="Am. J. Hum. Genet.">
        <authorList>
            <person name="Weston M.D."/>
            <person name="Eudy J.D."/>
            <person name="Fugita S."/>
            <person name="Yao S.-F."/>
            <person name="Usami S."/>
            <person name="Cremers C."/>
            <person name="Greenberg J."/>
            <person name="Ramesar R."/>
            <person name="Martini A."/>
            <person name="Moller C."/>
            <person name="Smith R.J."/>
            <person name="Sumegi J."/>
            <person name="Kimberling W.J."/>
        </authorList>
    </citation>
    <scope>ERRATUM OF PUBMED:10729113</scope>
</reference>
<reference key="4">
    <citation type="journal article" date="2004" name="Am. J. Hum. Genet.">
        <title>Identification of 51 novel exons of the Usher syndrome type 2A (USH2A) gene that encode multiple conserved functional domains and that are mutated in patients with Usher syndrome type II.</title>
        <authorList>
            <person name="Van Wijk E."/>
            <person name="Pennings R.J.E."/>
            <person name="Te Brinke H."/>
            <person name="Claassen A."/>
            <person name="Yntema H.G."/>
            <person name="Hoefsloot L.H."/>
            <person name="Cremers F.P.M."/>
            <person name="Cremers C.W.R.J."/>
            <person name="Kremer H."/>
        </authorList>
    </citation>
    <scope>NUCLEOTIDE SEQUENCE [MRNA] (ISOFORM 1)</scope>
    <scope>TISSUE SPECIFICITY</scope>
    <scope>VARIANTS USH2A CYS-4115 AND MET-4425</scope>
</reference>
<reference key="5">
    <citation type="journal article" date="2006" name="Nature">
        <title>The DNA sequence and biological annotation of human chromosome 1.</title>
        <authorList>
            <person name="Gregory S.G."/>
            <person name="Barlow K.F."/>
            <person name="McLay K.E."/>
            <person name="Kaul R."/>
            <person name="Swarbreck D."/>
            <person name="Dunham A."/>
            <person name="Scott C.E."/>
            <person name="Howe K.L."/>
            <person name="Woodfine K."/>
            <person name="Spencer C.C.A."/>
            <person name="Jones M.C."/>
            <person name="Gillson C."/>
            <person name="Searle S."/>
            <person name="Zhou Y."/>
            <person name="Kokocinski F."/>
            <person name="McDonald L."/>
            <person name="Evans R."/>
            <person name="Phillips K."/>
            <person name="Atkinson A."/>
            <person name="Cooper R."/>
            <person name="Jones C."/>
            <person name="Hall R.E."/>
            <person name="Andrews T.D."/>
            <person name="Lloyd C."/>
            <person name="Ainscough R."/>
            <person name="Almeida J.P."/>
            <person name="Ambrose K.D."/>
            <person name="Anderson F."/>
            <person name="Andrew R.W."/>
            <person name="Ashwell R.I.S."/>
            <person name="Aubin K."/>
            <person name="Babbage A.K."/>
            <person name="Bagguley C.L."/>
            <person name="Bailey J."/>
            <person name="Beasley H."/>
            <person name="Bethel G."/>
            <person name="Bird C.P."/>
            <person name="Bray-Allen S."/>
            <person name="Brown J.Y."/>
            <person name="Brown A.J."/>
            <person name="Buckley D."/>
            <person name="Burton J."/>
            <person name="Bye J."/>
            <person name="Carder C."/>
            <person name="Chapman J.C."/>
            <person name="Clark S.Y."/>
            <person name="Clarke G."/>
            <person name="Clee C."/>
            <person name="Cobley V."/>
            <person name="Collier R.E."/>
            <person name="Corby N."/>
            <person name="Coville G.J."/>
            <person name="Davies J."/>
            <person name="Deadman R."/>
            <person name="Dunn M."/>
            <person name="Earthrowl M."/>
            <person name="Ellington A.G."/>
            <person name="Errington H."/>
            <person name="Frankish A."/>
            <person name="Frankland J."/>
            <person name="French L."/>
            <person name="Garner P."/>
            <person name="Garnett J."/>
            <person name="Gay L."/>
            <person name="Ghori M.R.J."/>
            <person name="Gibson R."/>
            <person name="Gilby L.M."/>
            <person name="Gillett W."/>
            <person name="Glithero R.J."/>
            <person name="Grafham D.V."/>
            <person name="Griffiths C."/>
            <person name="Griffiths-Jones S."/>
            <person name="Grocock R."/>
            <person name="Hammond S."/>
            <person name="Harrison E.S.I."/>
            <person name="Hart E."/>
            <person name="Haugen E."/>
            <person name="Heath P.D."/>
            <person name="Holmes S."/>
            <person name="Holt K."/>
            <person name="Howden P.J."/>
            <person name="Hunt A.R."/>
            <person name="Hunt S.E."/>
            <person name="Hunter G."/>
            <person name="Isherwood J."/>
            <person name="James R."/>
            <person name="Johnson C."/>
            <person name="Johnson D."/>
            <person name="Joy A."/>
            <person name="Kay M."/>
            <person name="Kershaw J.K."/>
            <person name="Kibukawa M."/>
            <person name="Kimberley A.M."/>
            <person name="King A."/>
            <person name="Knights A.J."/>
            <person name="Lad H."/>
            <person name="Laird G."/>
            <person name="Lawlor S."/>
            <person name="Leongamornlert D.A."/>
            <person name="Lloyd D.M."/>
            <person name="Loveland J."/>
            <person name="Lovell J."/>
            <person name="Lush M.J."/>
            <person name="Lyne R."/>
            <person name="Martin S."/>
            <person name="Mashreghi-Mohammadi M."/>
            <person name="Matthews L."/>
            <person name="Matthews N.S.W."/>
            <person name="McLaren S."/>
            <person name="Milne S."/>
            <person name="Mistry S."/>
            <person name="Moore M.J.F."/>
            <person name="Nickerson T."/>
            <person name="O'Dell C.N."/>
            <person name="Oliver K."/>
            <person name="Palmeiri A."/>
            <person name="Palmer S.A."/>
            <person name="Parker A."/>
            <person name="Patel D."/>
            <person name="Pearce A.V."/>
            <person name="Peck A.I."/>
            <person name="Pelan S."/>
            <person name="Phelps K."/>
            <person name="Phillimore B.J."/>
            <person name="Plumb R."/>
            <person name="Rajan J."/>
            <person name="Raymond C."/>
            <person name="Rouse G."/>
            <person name="Saenphimmachak C."/>
            <person name="Sehra H.K."/>
            <person name="Sheridan E."/>
            <person name="Shownkeen R."/>
            <person name="Sims S."/>
            <person name="Skuce C.D."/>
            <person name="Smith M."/>
            <person name="Steward C."/>
            <person name="Subramanian S."/>
            <person name="Sycamore N."/>
            <person name="Tracey A."/>
            <person name="Tromans A."/>
            <person name="Van Helmond Z."/>
            <person name="Wall M."/>
            <person name="Wallis J.M."/>
            <person name="White S."/>
            <person name="Whitehead S.L."/>
            <person name="Wilkinson J.E."/>
            <person name="Willey D.L."/>
            <person name="Williams H."/>
            <person name="Wilming L."/>
            <person name="Wray P.W."/>
            <person name="Wu Z."/>
            <person name="Coulson A."/>
            <person name="Vaudin M."/>
            <person name="Sulston J.E."/>
            <person name="Durbin R.M."/>
            <person name="Hubbard T."/>
            <person name="Wooster R."/>
            <person name="Dunham I."/>
            <person name="Carter N.P."/>
            <person name="McVean G."/>
            <person name="Ross M.T."/>
            <person name="Harrow J."/>
            <person name="Olson M.V."/>
            <person name="Beck S."/>
            <person name="Rogers J."/>
            <person name="Bentley D.R."/>
        </authorList>
    </citation>
    <scope>NUCLEOTIDE SEQUENCE [LARGE SCALE GENOMIC DNA]</scope>
</reference>
<reference key="6">
    <citation type="journal article" date="2002" name="Hear. Res.">
        <title>Localization and expression of usherin: a novel basement membrane protein defective in people with Usher's syndrome type IIa.</title>
        <authorList>
            <person name="Bhattacharya G."/>
            <person name="Miller C."/>
            <person name="Kimberling W.J."/>
            <person name="Jablonski M.M."/>
            <person name="Cosgrove D."/>
        </authorList>
    </citation>
    <scope>TISSUE SPECIFICITY</scope>
</reference>
<reference key="7">
    <citation type="journal article" date="2002" name="Hear. Res.">
        <title>Usherin expression is highly conserved in mouse and human tissues.</title>
        <authorList>
            <person name="Pearsall N."/>
            <person name="Bhattacharya G."/>
            <person name="Wisecarver J."/>
            <person name="Adams J."/>
            <person name="Cosgrove D."/>
            <person name="Kimberling W."/>
        </authorList>
    </citation>
    <scope>TISSUE SPECIFICITY</scope>
</reference>
<reference key="8">
    <citation type="journal article" date="2004" name="J. Cell Sci.">
        <title>A domain-specific usherin/collagen IV interaction may be required for stable integration into the basement membrane superstructure.</title>
        <authorList>
            <person name="Bhattacharya G."/>
            <person name="Kalluri R."/>
            <person name="Orten D.J."/>
            <person name="Kimberling W.J."/>
            <person name="Cosgrove D."/>
        </authorList>
    </citation>
    <scope>SUBCELLULAR LOCATION</scope>
    <scope>INTERACTION WITH COLLAGEN</scope>
</reference>
<reference key="9">
    <citation type="journal article" date="2005" name="Biochemistry">
        <title>Evidence for functional importance of usherin/fibronectin interactions in retinal basement membranes.</title>
        <authorList>
            <person name="Bhattacharya G."/>
            <person name="Cosgrove D."/>
        </authorList>
    </citation>
    <scope>INTERACTION WITH FIBRONECTIN</scope>
</reference>
<reference key="10">
    <citation type="journal article" date="2005" name="Hum. Mol. Genet.">
        <title>Usherin, the defective protein in Usher syndrome type IIA, is likely to be a component of interstereocilia ankle links in the inner ear sensory cells.</title>
        <authorList>
            <person name="Adato A."/>
            <person name="Lefevre G."/>
            <person name="Delprat B."/>
            <person name="Michel V."/>
            <person name="Michalski N."/>
            <person name="Chardenoux S."/>
            <person name="Weil D."/>
            <person name="El-Amraoui A."/>
            <person name="Petit C."/>
        </authorList>
    </citation>
    <scope>ALTERNATIVE SPLICING (ISOFORM 3)</scope>
</reference>
<reference key="11">
    <citation type="journal article" date="2005" name="Hum. Mol. Genet.">
        <title>Scaffold protein harmonin (USH1C) provides molecular links between Usher syndrome type 1 and type 2.</title>
        <authorList>
            <person name="Reiners J."/>
            <person name="van Wijk E."/>
            <person name="Maerker T."/>
            <person name="Zimmermann U."/>
            <person name="Juergens K."/>
            <person name="te Brinke H."/>
            <person name="Overlack N."/>
            <person name="Roepman R."/>
            <person name="Knipper M."/>
            <person name="Kremer H."/>
            <person name="Wolfrum U."/>
        </authorList>
    </citation>
    <scope>INTERACTION WITH USH1C</scope>
</reference>
<reference key="12">
    <citation type="journal article" date="2006" name="Hum. Mol. Genet.">
        <title>The DFNB31 gene product whirlin connects to the Usher protein network in the cochlea and retina by direct association with USH2A and VLGR1.</title>
        <authorList>
            <person name="van Wijk E."/>
            <person name="van der Zwaag B."/>
            <person name="Peters T."/>
            <person name="Zimmermann U."/>
            <person name="Te Brinke H."/>
            <person name="Kersten F.F.J."/>
            <person name="Maerker T."/>
            <person name="Aller E."/>
            <person name="Hoefsloot L.H."/>
            <person name="Cremers C.W.R.J."/>
            <person name="Cremers F.P.M."/>
            <person name="Wolfrum U."/>
            <person name="Knipper M."/>
            <person name="Roepman R."/>
            <person name="Kremer H."/>
        </authorList>
    </citation>
    <scope>INTERACTION WITH WHRN</scope>
</reference>
<reference key="13">
    <citation type="journal article" date="2003" name="Clin. Genet.">
        <title>The molecular genetics of Usher syndrome.</title>
        <authorList>
            <person name="Ahmed Z.M."/>
            <person name="Riazuddin S."/>
            <person name="Riazuddin S."/>
            <person name="Wilcox E.R."/>
        </authorList>
    </citation>
    <scope>REVIEW ON VARIANTS</scope>
</reference>
<reference key="14">
    <citation type="journal article" date="2009" name="Hum. Mol. Genet.">
        <title>Usher syndrome and Leber congenital amaurosis are molecularly linked via a novel isoform of the centrosomal ninein-like protein.</title>
        <authorList>
            <person name="van Wijk E."/>
            <person name="Kersten F.F.J."/>
            <person name="Kartono A."/>
            <person name="Mans D.A."/>
            <person name="Brandwijk K."/>
            <person name="Letteboer S.J.F."/>
            <person name="Peters T.A."/>
            <person name="Maerker T."/>
            <person name="Yan X."/>
            <person name="Cremers C.W.R.J."/>
            <person name="Cremers F.P.M."/>
            <person name="Wolfrum U."/>
            <person name="Roepman R."/>
            <person name="Kremer H."/>
        </authorList>
    </citation>
    <scope>INTERACTION WITH NINL</scope>
</reference>
<reference key="15">
    <citation type="journal article" date="2010" name="J. Clin. Invest.">
        <title>PDZD7 is a modifier of retinal disease and a contributor to digenic Usher syndrome.</title>
        <authorList>
            <person name="Ebermann I."/>
            <person name="Phillips J.B."/>
            <person name="Liebau M.C."/>
            <person name="Koenekoop R.K."/>
            <person name="Schermer B."/>
            <person name="Lopez I."/>
            <person name="Schafer E."/>
            <person name="Roux A.F."/>
            <person name="Dafinger C."/>
            <person name="Bernd A."/>
            <person name="Zrenner E."/>
            <person name="Claustres M."/>
            <person name="Blanco B."/>
            <person name="Nurnberg G."/>
            <person name="Nurnberg P."/>
            <person name="Ruland R."/>
            <person name="Westerfield M."/>
            <person name="Benzing T."/>
            <person name="Bolz H.J."/>
        </authorList>
    </citation>
    <scope>INTERACTION WITH PDZD7</scope>
    <scope>VARIANT USH2A ILE-4439</scope>
</reference>
<reference key="16">
    <citation type="journal article" date="2000" name="Am. J. Hum. Genet.">
        <title>Missense mutation in the USH2A gene: association with recessive retinitis pigmentosa without hearing loss.</title>
        <authorList>
            <person name="Rivolta C."/>
            <person name="Sweklo E.A."/>
            <person name="Berson E.L."/>
            <person name="Dryja T.P."/>
        </authorList>
    </citation>
    <scope>INVOLVEMENT IN RP39</scope>
    <scope>VARIANT RP39 PHE-759</scope>
</reference>
<reference key="17">
    <citation type="journal article" date="2000" name="Eur. J. Hum. Genet.">
        <title>Identification of novel USH2A mutations: implications for the structure of USH2A protein.</title>
        <authorList>
            <person name="Dreyer B."/>
            <person name="Tranebjaerg L."/>
            <person name="Rosenberg T."/>
            <person name="Weston M.D."/>
            <person name="Kimberling W.J."/>
            <person name="Nilssen O."/>
        </authorList>
    </citation>
    <scope>VARIANTS USH2A TYR-163; MET-230 AND ARG-536</scope>
    <scope>VARIANT ARG-713</scope>
</reference>
<reference key="18">
    <citation type="journal article" date="2000" name="Hum. Mutat.">
        <title>Three novel mutations and twelve polymorphisms identified in the USH2A gene in Israeli USH2 families.</title>
        <authorList>
            <person name="Adato A."/>
            <person name="Weston M.D."/>
            <person name="Berry A."/>
            <person name="Kimberling W.J."/>
            <person name="Bonne-Tamir A."/>
        </authorList>
    </citation>
    <scope>VARIANTS USH2A TRP-334 AND MET-1515</scope>
    <scope>VARIANTS ASP-478; VAL-644 AND LYS-1486</scope>
</reference>
<reference key="19">
    <citation type="journal article" date="2001" name="Exp. Eye Res.">
        <title>Spectrum of mutations in USH2A in British patients with Usher syndrome type II.</title>
        <authorList>
            <person name="Leroy B.P."/>
            <person name="Aragon-Martin J.A."/>
            <person name="Weston M.D."/>
            <person name="Bessant D.A.R."/>
            <person name="Willis C."/>
            <person name="Webster A.R."/>
            <person name="Bird A.C."/>
            <person name="Kimberling W.J."/>
            <person name="Payne A.M."/>
            <person name="Bhattacharya S.S."/>
        </authorList>
    </citation>
    <scope>VARIANTS USH2A GLU-218; MET-230 AND VAL-555</scope>
</reference>
<reference key="20">
    <citation type="journal article" date="2002" name="Arch. Ophthalmol.">
        <title>Paternal uniparental heterodisomy with partial isodisomy of chromosome 1 in a patient with retinitis pigmentosa without hearing loss and a missense mutation in the Usher syndrome type II gene USH2A.</title>
        <authorList>
            <person name="Rivolta C."/>
            <person name="Berson E.L."/>
            <person name="Dryja T.P."/>
        </authorList>
    </citation>
    <scope>VARIANT RP39 PHE-759</scope>
</reference>
<reference key="21">
    <citation type="journal article" date="2002" name="Hum. Mutat.">
        <title>Mutations in myosin VIIA (MYO7A) and usherin (USH2A) in Spanish patients with Usher syndrome types I and II, respectively.</title>
        <authorList>
            <person name="Najera C."/>
            <person name="Beneyto M."/>
            <person name="Blanca J."/>
            <person name="Aller E."/>
            <person name="Fontcuberta A."/>
            <person name="Millan J.M."/>
            <person name="Ayuso C."/>
        </authorList>
    </citation>
    <scope>VARIANT ARG-713</scope>
    <scope>VARIANT RP39 PHE-759</scope>
</reference>
<reference key="22">
    <citation type="journal article" date="2003" name="J. Med. Genet.">
        <title>Mutations in USH2A in Spanish patients with autosomal recessive retinitis pigmentosa: high prevalence and phenotypic variation.</title>
        <authorList>
            <person name="Bernal S."/>
            <person name="Ayuso C."/>
            <person name="Antinolo G."/>
            <person name="Gimenez A."/>
            <person name="Borrego S."/>
            <person name="Trujillo M.J."/>
            <person name="Marcos I."/>
            <person name="Calaf M."/>
            <person name="Del Rio E."/>
            <person name="Baiget M."/>
        </authorList>
    </citation>
    <scope>VARIANTS USH2A PRO-610 AND ARG-761</scope>
</reference>
<reference key="23">
    <citation type="journal article" date="2004" name="Clin. Genet.">
        <title>Mutational spectrum in Usher syndrome type II.</title>
        <authorList>
            <person name="Ouyang X.M."/>
            <person name="Yan D."/>
            <person name="Hejtmancik J.F."/>
            <person name="Jacobson S.G."/>
            <person name="Li A.R."/>
            <person name="Du L.L."/>
            <person name="Angeli S."/>
            <person name="Kaiser M."/>
            <person name="Balkany T."/>
            <person name="Liu X.Z."/>
        </authorList>
    </citation>
    <scope>VARIANTS USH2A TRP-334; HIS-346 AND THR-357</scope>
    <scope>VARIANTS SER-479 AND VAL-644</scope>
</reference>
<reference key="24">
    <citation type="journal article" date="2004" name="Clin. Genet.">
        <authorList>
            <person name="Ouyang X.M."/>
            <person name="Yan D."/>
            <person name="Hejtmancik J.F."/>
            <person name="Jacobson S.G."/>
            <person name="Li A.R."/>
            <person name="Du L.L."/>
            <person name="Angeli S."/>
            <person name="Kaiser M."/>
            <person name="Balkany T."/>
            <person name="Liu X.Z."/>
        </authorList>
    </citation>
    <scope>ERRATUM OF PUBMED:15025721</scope>
</reference>
<reference key="25">
    <citation type="journal article" date="2004" name="Eur. J. Hum. Genet.">
        <title>Genetic analysis of 2299delG and C759F mutations (USH2A) in patients with visual and/or auditory impairments.</title>
        <authorList>
            <person name="Aller E."/>
            <person name="Najera C."/>
            <person name="Millan J.M."/>
            <person name="Oltra J.S."/>
            <person name="Perez-Garrigues H."/>
            <person name="Vilela C."/>
            <person name="Navea A."/>
            <person name="Beneyto M."/>
        </authorList>
    </citation>
    <scope>VARIANT USH2A SER-303</scope>
    <scope>VARIANT RP39 PHE-759</scope>
</reference>
<reference key="26">
    <citation type="journal article" date="2004" name="Exp. Eye Res.">
        <title>Comprehensive screening of the USH2A gene in Usher syndrome type II and non-syndromic recessive retinitis pigmentosa.</title>
        <authorList>
            <person name="Seyedahmadi B.J."/>
            <person name="Rivolta C."/>
            <person name="Keene J.A."/>
            <person name="Berson E.L."/>
            <person name="Dryja T.P."/>
        </authorList>
    </citation>
    <scope>VARIANTS USH2A ILE-307; ILE-391; PHE-419; CYS-464; VAL-516; THR-517; SER-575; ASN-587 DEL AND LEU-1059</scope>
    <scope>VARIANTS RP39/USH2A ASP-478 AND PHE-759</scope>
    <scope>VARIANTS RP39 LEU-739; ASN-911 AND ARG-1470</scope>
    <scope>VARIANTS THR-125; MET-230; ARG-268; PHE-365; VAL-644; ARG-713; VAL-1047 AND LYS-1486</scope>
</reference>
<reference key="27">
    <citation type="journal article" date="2004" name="Hum. Mutat.">
        <title>USH2A mutation analysis in 70 Dutch families with Usher syndrome type II.</title>
        <authorList>
            <person name="Pennings R.J.E."/>
            <person name="Te Brinke H."/>
            <person name="Weston M.D."/>
            <person name="Claassen A."/>
            <person name="Orten D.J."/>
            <person name="Weekamp H."/>
            <person name="Van Aarem A."/>
            <person name="Huygen P.L.M."/>
            <person name="Deutman A.F."/>
            <person name="Hoefsloot L.H."/>
            <person name="Cremers F.P.M."/>
            <person name="Cremers C.W.R.J."/>
            <person name="Kimberling W.J."/>
            <person name="Kremer H."/>
        </authorList>
    </citation>
    <scope>VARIANTS USH2A HIS-346; PHE-419 AND ARG-536</scope>
    <scope>VARIANT ARG-713</scope>
</reference>
<reference key="28">
    <citation type="journal article" date="2005" name="Clin. Genet.">
        <title>Clinical and genetic studies in Spanish patients with Usher syndrome type II: description of new mutations and evidence for a lack of genotype-phenotype correlation.</title>
        <authorList>
            <person name="Bernal S."/>
            <person name="Meda C."/>
            <person name="Solans T."/>
            <person name="Ayuso C."/>
            <person name="Garcia-Sandoval B."/>
            <person name="Valverde D."/>
            <person name="Del Rio E."/>
            <person name="Baiget M."/>
        </authorList>
    </citation>
    <scope>VARIANT RP39 PHE-759</scope>
    <scope>VARIANTS THR-125; ASP-478; VAL-644; GLU-703; TYR-841 AND LYS-1486</scope>
</reference>
<reference key="29">
    <citation type="journal article" date="2006" name="J. Med. Genet.">
        <title>Identification of 14 novel mutations in the long isoform of USH2A in Spanish patients with Usher syndrome type II.</title>
        <authorList>
            <person name="Aller E."/>
            <person name="Jaijo T."/>
            <person name="Beneyto M."/>
            <person name="Najera C."/>
            <person name="Oltra S."/>
            <person name="Ayuso C."/>
            <person name="Baiget M."/>
            <person name="Carballo M."/>
            <person name="Antinolo G."/>
            <person name="Valverde D."/>
            <person name="Moreno F."/>
            <person name="Vilela C."/>
            <person name="Collado D."/>
            <person name="Perez-Garrigues H."/>
            <person name="Navea A."/>
            <person name="Millan J.M."/>
        </authorList>
    </citation>
    <scope>VARIANTS USH2A ASP-2249; HIS-2354; ARG-3251; ARG-3267; TYR-3472 INS; MET-3571; MET-4337 AND LEU-4818</scope>
    <scope>VARIANTS ARG-713; PHE-1572; THR-1665; THR-2106; THR-2169; ALA-2238; GLN-2875; PHE-2886; SER-3099; ASN-3144; ALA-3411 AND VAL-3868</scope>
</reference>
<reference key="30">
    <citation type="journal article" date="2007" name="Arch. Ophthalmol.">
        <title>Novel USH2A mutations in Israeli patients with retinitis pigmentosa and Usher syndrome type 2.</title>
        <authorList>
            <person name="Kaiserman N."/>
            <person name="Obolensky A."/>
            <person name="Banin E."/>
            <person name="Sharon D."/>
        </authorList>
    </citation>
    <scope>VARIANT RP39 GLY-4674</scope>
    <scope>VARIANTS THR-125; ASP-478; VAL-644; ARG-713; LYS-1486; THR-1665; THR-2106; THR-2169; GLN-2875; SER-3099; ASN-3144 AND MET-3335</scope>
</reference>
<reference key="31">
    <citation type="journal article" date="2007" name="Hum. Mutat.">
        <title>Molecular and in silico analyses of the full-length isoform of usherin identify new pathogenic alleles in Usher type II patients.</title>
        <authorList>
            <person name="Baux D."/>
            <person name="Larrieu L."/>
            <person name="Blanchet C."/>
            <person name="Hamel C."/>
            <person name="Ben Salah S."/>
            <person name="Vielle A."/>
            <person name="Gilbert-Dussardier B."/>
            <person name="Holder M."/>
            <person name="Calvas P."/>
            <person name="Philip N."/>
            <person name="Edery P."/>
            <person name="Bonneau D."/>
            <person name="Claustres M."/>
            <person name="Malcolm S."/>
            <person name="Roux A.-F."/>
        </authorList>
    </citation>
    <scope>VARIANTS USH2A GLU-218; PHE-280; LYS-284; TRP-334; GLN-334; HIS-346; ILE-352; PHE-759; GLU-1833; SER-2795; ARG-3282; MET-3571; GLU-3895; MET-3976; CYS-4115 AND MET-4425</scope>
    <scope>VARIANT PHE-1572</scope>
</reference>
<reference key="32">
    <citation type="journal article" date="2008" name="Genet. Test.">
        <title>Four USH2A founder mutations underlie the majority of Usher syndrome type 2 cases among non-Ashkenazi Jews.</title>
        <authorList>
            <person name="Auslender N."/>
            <person name="Bandah D."/>
            <person name="Rizel L."/>
            <person name="Behar D.M."/>
            <person name="Shohat M."/>
            <person name="Banin E."/>
            <person name="Allon-Shalev S."/>
            <person name="Sharony R."/>
            <person name="Sharon D."/>
            <person name="Ben-Yosef T."/>
        </authorList>
    </citation>
    <scope>VARIANTS USH2A TRP-334 AND VAL-1840</scope>
</reference>
<reference key="33">
    <citation type="journal article" date="2008" name="Hum. Mutat.">
        <title>Spectrum of USH2A mutations in Scandinavian patients with Usher syndrome type II.</title>
        <authorList>
            <person name="Dreyer B."/>
            <person name="Brox V."/>
            <person name="Tranebjaerg L."/>
            <person name="Rosenberg T."/>
            <person name="Sadeghi A.M."/>
            <person name="Moeller C."/>
            <person name="Nilssen O."/>
        </authorList>
    </citation>
    <scope>VARIANTS USH2A TYR-163; ARG-268; CYS-303; TRP-334; HIS-346; ILE-352; ARG-536; PHE-759; LEU-1212; 2265-GLU-TYR-2266 DELINS ASP; GLY-3124; THR-3504; ARG-3521; ILE-4054; ARG-4232; ILE-4439; CYS-4487; HIS-4592 AND ARG-4795</scope>
    <scope>VARIANTS THR-125; MET-230; ASP-478; SER-595; VAL-644; ARG-713; PRO-1349; LYS-1486; PHE-1572; THR-1665; CYS-1757; ASN-2080; ASN-2086; THR-2106; THR-2169; ALA-2238; HIS-2292; ALA-2562; GLN-2875; PHE-2886; LYS-3088; SER-3099; ALA-3115; ASN-3144; ASP-3199; ALA-3411; LEU-3590; ILE-3835; VAL-3868; THR-3893; LEU-4433; VAL-4624 AND TRP-5031</scope>
</reference>
<reference key="34">
    <citation type="journal article" date="2009" name="Clin. Genet.">
        <title>Identification of 11 novel mutations in USH2A among Japanese patients with Usher syndrome type 2.</title>
        <authorList>
            <person name="Nakanishi H."/>
            <person name="Ohtsubo M."/>
            <person name="Iwasaki S."/>
            <person name="Hotta Y."/>
            <person name="Mizuta K."/>
            <person name="Mineta H."/>
            <person name="Minoshima S."/>
        </authorList>
    </citation>
    <scope>VARIANTS USH2A PRO-180; TYR-691; SER-1369 DEL; ARG-2752; GLY-3515; MET-3571 AND CYS-3747</scope>
    <scope>VARIANTS LYS-1486; THR-2106; THR-2169; GLN-2875; PHE-2886; ALA-3115; ASP-3199; ALA-3411; ILE-3835; VAL-3868; ARG-4203; HIS-4493; VAL-4611; GLU-4838; GLN-4848 AND GLU-5026</scope>
</reference>
<reference key="35">
    <citation type="journal article" date="2010" name="Invest. Ophthalmol. Vis. Sci.">
        <title>Microarray-based mutation analysis of 183 Spanish families with Usher syndrome.</title>
        <authorList>
            <person name="Jaijo T."/>
            <person name="Aller E."/>
            <person name="Garcia-Garcia G."/>
            <person name="Aparisi M.J."/>
            <person name="Bernal S."/>
            <person name="Avila-Fernandez A."/>
            <person name="Barragan I."/>
            <person name="Baiget M."/>
            <person name="Ayuso C."/>
            <person name="Antinolo G."/>
            <person name="Diaz-Llopis M."/>
            <person name="Kulm M."/>
            <person name="Beneyto M."/>
            <person name="Najera C."/>
            <person name="Millan J.M."/>
        </authorList>
    </citation>
    <scope>VARIANTS USH2A TRP-334 AND VAL-555</scope>
</reference>
<reference key="36">
    <citation type="journal article" date="2010" name="J. Med. Genet.">
        <title>Novel mutations in the long isoform of the USH2A gene in patients with Usher syndrome type II or non-syndromic retinitis pigmentosa.</title>
        <authorList>
            <person name="McGee T.L."/>
            <person name="Seyedahmadi B.J."/>
            <person name="Sweeney M.O."/>
            <person name="Dryja T.P."/>
            <person name="Berson E.L."/>
        </authorList>
    </citation>
    <scope>VARIANTS USH2A THR-1836; GLY-1953; ASN-2080; ARG-2116; PHE-2128; TYR-2128; THR-2196; ALA-2238; PRO-2260; HIS-2292; ALA-2562; PRO-2639; SER-2786; 3263-ILE--GLY-3269 DEL; LYS-3448; ILE-3462; CYS-3479; SER-3529; MET-3844; LYS-3904; ARG-4174; ARG-4269; LEU-4433; 4445-GLU--SER-4449 DELINS ASP-LEU; HIS-4570; GLU-4662; ARG-4692; ARG-4763; ARG-4808; ARG-4817 AND MET-4918</scope>
    <scope>VARIANTS RP39 SER-1978; TYR-2237; HIS-2573; LYS-2930; TYR-3358; TYR-3384; PRO-3606; SER-3618; HIS-3719; LYS-4094; HIS-4192; ASN-4248; VAL-4447; PRO-4840; MET-4844; HIS-5143; ILE-5145 AND GLY-5188</scope>
    <scope>VARIANTS PHE-1572; THR-1665; THR-2169; GLN-2875; SER-3099; ASN-3144; ALA-3411; VAL-3868; ASP-4778; GLU-4838; GLN-4848 AND GLU-5026</scope>
</reference>
<reference key="37">
    <citation type="journal article" date="2010" name="Mol. Vis.">
        <title>Novel USH2A compound heterozygous mutations cause RP/USH2 in a Chinese family.</title>
        <authorList>
            <person name="Liu X."/>
            <person name="Tang Z."/>
            <person name="Li C."/>
            <person name="Yang K."/>
            <person name="Gan G."/>
            <person name="Zhang Z."/>
            <person name="Liu J."/>
            <person name="Jiang F."/>
            <person name="Wang Q."/>
            <person name="Liu M."/>
        </authorList>
    </citation>
    <scope>VARIANT USH2A ARG-1734</scope>
</reference>
<reference key="38">
    <citation type="journal article" date="2011" name="Am. J. Hum. Genet.">
        <title>Exome sequencing reveals a homozygous SYT14 mutation in adult-onset, autosomal-recessive spinocerebellar ataxia with psychomotor retardation.</title>
        <authorList>
            <person name="Doi H."/>
            <person name="Yoshida K."/>
            <person name="Yasuda T."/>
            <person name="Fukuda M."/>
            <person name="Fukuda Y."/>
            <person name="Morita H."/>
            <person name="Ikeda S."/>
            <person name="Kato R."/>
            <person name="Tsurusaki Y."/>
            <person name="Miyake N."/>
            <person name="Saitsu H."/>
            <person name="Sakai H."/>
            <person name="Miyatake S."/>
            <person name="Shiina M."/>
            <person name="Nukina N."/>
            <person name="Koyano S."/>
            <person name="Tsuji S."/>
            <person name="Kuroiwa Y."/>
            <person name="Matsumoto N."/>
        </authorList>
    </citation>
    <scope>VARIANT ARG-4203</scope>
</reference>
<reference key="39">
    <citation type="journal article" date="2011" name="J. Hum. Genet.">
        <title>Novel USH2A mutations in Japanese Usher syndrome type 2 patients: marked differences in the mutation spectrum between the Japanese and other populations.</title>
        <authorList>
            <person name="Nakanishi H."/>
            <person name="Ohtsubo M."/>
            <person name="Iwasaki S."/>
            <person name="Hotta Y."/>
            <person name="Usami S."/>
            <person name="Mizuta K."/>
            <person name="Mineta H."/>
            <person name="Minoshima S."/>
        </authorList>
    </citation>
    <scope>VARIANT USH2A TRP-1777</scope>
    <scope>VARIANTS VAL-4616 AND THR-4881</scope>
</reference>
<reference key="40">
    <citation type="journal article" date="2011" name="Mol. Vis.">
        <title>Seven novel mutations in the long isoform of the USH2A gene in Chinese families with nonsyndromic retinitis pigmentosa and Usher syndrome Type II.</title>
        <authorList>
            <person name="Xu W."/>
            <person name="Dai H."/>
            <person name="Lu T."/>
            <person name="Zhang X."/>
            <person name="Dong B."/>
            <person name="Li Y."/>
        </authorList>
    </citation>
    <scope>VARIANT RP39 TRP-934</scope>
    <scope>VARIANT USH2A CYS-2744</scope>
    <scope>VARIANTS THR-125; LYS-1486; THR-2106; THR-2169 AND ALA-3411</scope>
</reference>
<reference key="41">
    <citation type="journal article" date="2011" name="Nature">
        <title>Exome sequencing identifies frequent mutation of the SWI/SNF complex gene PBRM1 in renal carcinoma.</title>
        <authorList>
            <person name="Varela I."/>
            <person name="Tarpey P."/>
            <person name="Raine K."/>
            <person name="Huang D."/>
            <person name="Ong C.K."/>
            <person name="Stephens P."/>
            <person name="Davies H."/>
            <person name="Jones D."/>
            <person name="Lin M.L."/>
            <person name="Teague J."/>
            <person name="Bignell G."/>
            <person name="Butler A."/>
            <person name="Cho J."/>
            <person name="Dalgliesh G.L."/>
            <person name="Galappaththige D."/>
            <person name="Greenman C."/>
            <person name="Hardy C."/>
            <person name="Jia M."/>
            <person name="Latimer C."/>
            <person name="Lau K.W."/>
            <person name="Marshall J."/>
            <person name="McLaren S."/>
            <person name="Menzies A."/>
            <person name="Mudie L."/>
            <person name="Stebbings L."/>
            <person name="Largaespada D.A."/>
            <person name="Wessels L.F.A."/>
            <person name="Richard S."/>
            <person name="Kahnoski R.J."/>
            <person name="Anema J."/>
            <person name="Tuveson D.A."/>
            <person name="Perez-Mancera P.A."/>
            <person name="Mustonen V."/>
            <person name="Fischer A."/>
            <person name="Adams D.J."/>
            <person name="Rust A."/>
            <person name="Chan-On W."/>
            <person name="Subimerb C."/>
            <person name="Dykema K."/>
            <person name="Furge K."/>
            <person name="Campbell P.J."/>
            <person name="Teh B.T."/>
            <person name="Stratton M.R."/>
            <person name="Futreal P.A."/>
        </authorList>
    </citation>
    <scope>VARIANT ILE-453</scope>
</reference>
<reference key="42">
    <citation type="journal article" date="2011" name="Orphanet J. Rare Dis.">
        <title>Mutational screening of the USH2A gene in Spanish USH patients reveals 23 novel pathogenic mutations.</title>
        <authorList>
            <person name="Garcia-Garcia G."/>
            <person name="Aparisi M.J."/>
            <person name="Jaijo T."/>
            <person name="Rodrigo R."/>
            <person name="Leon A.M."/>
            <person name="Avila-Fernandez A."/>
            <person name="Blanco-Kelly F."/>
            <person name="Bernal S."/>
            <person name="Navarro R."/>
            <person name="Diaz-Llopis M."/>
            <person name="Baiget M."/>
            <person name="Ayuso C."/>
            <person name="Millan J.M."/>
            <person name="Aller E."/>
        </authorList>
    </citation>
    <scope>VARIANTS USH2A ARG-44; MET-382; ARG-3546 AND ASP-3894</scope>
    <scope>VARIANTS SER-2377; LYS-2394; ILE-3835 AND LYS-4921</scope>
</reference>
<reference key="43">
    <citation type="journal article" date="2012" name="Hum. Mutat.">
        <title>Next-generation genetic testing for retinitis pigmentosa.</title>
        <authorList>
            <person name="Neveling K."/>
            <person name="Collin R.W."/>
            <person name="Gilissen C."/>
            <person name="van Huet R.A."/>
            <person name="Visser L."/>
            <person name="Kwint M.P."/>
            <person name="Gijsen S.J."/>
            <person name="Zonneveld M.N."/>
            <person name="Wieskamp N."/>
            <person name="de Ligt J."/>
            <person name="Siemiatkowska A.M."/>
            <person name="Hoefsloot L.H."/>
            <person name="Buckley M.F."/>
            <person name="Kellner U."/>
            <person name="Branham K.E."/>
            <person name="den Hollander A.I."/>
            <person name="Hoischen A."/>
            <person name="Hoyng C."/>
            <person name="Klevering B.J."/>
            <person name="van den Born L.I."/>
            <person name="Veltman J.A."/>
            <person name="Cremers F.P."/>
            <person name="Scheffer H."/>
        </authorList>
    </citation>
    <scope>VARIANTS RP39 PHE-419; PHE-759; CYS-1859; HIS-2460; TYR-3358; ARG-3669; CYS-4115; HIS-4192 AND MET-4425</scope>
</reference>
<reference key="44">
    <citation type="journal article" date="2013" name="Mol. Vis.">
        <title>Whole-exome sequencing identifies novel compound heterozygous mutations in USH2A in Spanish patients with autosomal recessive retinitis pigmentosa.</title>
        <authorList>
            <person name="Mendez-Vidal C."/>
            <person name="Gonzalez-Del Pozo M."/>
            <person name="Vela-Boza A."/>
            <person name="Santoyo-Lopez J."/>
            <person name="Lopez-Domingo F.J."/>
            <person name="Vazquez-Marouschek C."/>
            <person name="Dopazo J."/>
            <person name="Borrego S."/>
            <person name="Antinolo G."/>
        </authorList>
    </citation>
    <scope>VARIANTS RP39 SER-1442 AND ARG-5063</scope>
</reference>
<reference key="45">
    <citation type="journal article" date="2013" name="PLoS ONE">
        <title>Targeted exome sequencing identified novel USH2A mutations in Usher syndrome families.</title>
        <authorList>
            <person name="Huang X.F."/>
            <person name="Xiang P."/>
            <person name="Chen J."/>
            <person name="Xing D.J."/>
            <person name="Huang N."/>
            <person name="Min Q."/>
            <person name="Gu F."/>
            <person name="Tong Y."/>
            <person name="Pang C.P."/>
            <person name="Qu J."/>
            <person name="Jin Z.B."/>
        </authorList>
    </citation>
    <scope>VARIANTS USH2A LEU-1843; SER-1861; ASN-2738 AND CYS-5143</scope>
</reference>
<reference key="46">
    <citation type="journal article" date="2014" name="J. Transl. Med.">
        <title>Targeted genomic capture and massively parallel sequencing to identify novel variants causing Chinese hereditary hearing loss.</title>
        <authorList>
            <person name="Wei Q."/>
            <person name="Zhu H."/>
            <person name="Qian X."/>
            <person name="Chen Z."/>
            <person name="Yao J."/>
            <person name="Lu Y."/>
            <person name="Cao X."/>
            <person name="Xing G."/>
        </authorList>
    </citation>
    <scope>VARIANT LEU-1684</scope>
</reference>
<reference key="47">
    <citation type="journal article" date="2015" name="BMC Med. Genet.">
        <title>Targeted exome sequencing reveals novel USH2A mutations in Chinese patients with simplex Usher syndrome.</title>
        <authorList>
            <person name="Shu H.R."/>
            <person name="Bi H."/>
            <person name="Pan Y.C."/>
            <person name="Xu H.Y."/>
            <person name="Song J.X."/>
            <person name="Hu J."/>
        </authorList>
    </citation>
    <scope>VARIANT USH2A PHE-4386</scope>
</reference>
<reference key="48">
    <citation type="journal article" date="2017" name="Genet. Test. Mol. Biomarkers">
        <title>Molecular Analysis of Twelve Pakistani Families with Nonsyndromic or Syndromic Hearing Loss.</title>
        <authorList>
            <person name="Wang R."/>
            <person name="Han S."/>
            <person name="Khan A."/>
            <person name="Zhang X."/>
        </authorList>
    </citation>
    <scope>VARIANTS THR-2811 AND ALA-3504</scope>
</reference>
<protein>
    <recommendedName>
        <fullName>Usherin</fullName>
    </recommendedName>
    <alternativeName>
        <fullName>Usher syndrome type IIa protein</fullName>
    </alternativeName>
    <alternativeName>
        <fullName>Usher syndrome type-2A protein</fullName>
    </alternativeName>
</protein>
<dbReference type="EMBL" id="AF055580">
    <property type="protein sequence ID" value="AAC23748.2"/>
    <property type="molecule type" value="mRNA"/>
</dbReference>
<dbReference type="EMBL" id="AF091889">
    <property type="protein sequence ID" value="AAF75819.1"/>
    <property type="molecule type" value="Genomic_DNA"/>
</dbReference>
<dbReference type="EMBL" id="AF091873">
    <property type="protein sequence ID" value="AAF75819.1"/>
    <property type="status" value="JOINED"/>
    <property type="molecule type" value="Genomic_DNA"/>
</dbReference>
<dbReference type="EMBL" id="AF091875">
    <property type="protein sequence ID" value="AAF75819.1"/>
    <property type="status" value="JOINED"/>
    <property type="molecule type" value="Genomic_DNA"/>
</dbReference>
<dbReference type="EMBL" id="AF091876">
    <property type="protein sequence ID" value="AAF75819.1"/>
    <property type="status" value="JOINED"/>
    <property type="molecule type" value="Genomic_DNA"/>
</dbReference>
<dbReference type="EMBL" id="AF091874">
    <property type="protein sequence ID" value="AAF75819.1"/>
    <property type="status" value="JOINED"/>
    <property type="molecule type" value="Genomic_DNA"/>
</dbReference>
<dbReference type="EMBL" id="AF091877">
    <property type="protein sequence ID" value="AAF75819.1"/>
    <property type="status" value="JOINED"/>
    <property type="molecule type" value="Genomic_DNA"/>
</dbReference>
<dbReference type="EMBL" id="AF091879">
    <property type="protein sequence ID" value="AAF75819.1"/>
    <property type="status" value="JOINED"/>
    <property type="molecule type" value="Genomic_DNA"/>
</dbReference>
<dbReference type="EMBL" id="AF091881">
    <property type="protein sequence ID" value="AAF75819.1"/>
    <property type="status" value="JOINED"/>
    <property type="molecule type" value="Genomic_DNA"/>
</dbReference>
<dbReference type="EMBL" id="AF091883">
    <property type="protein sequence ID" value="AAF75819.1"/>
    <property type="status" value="JOINED"/>
    <property type="molecule type" value="Genomic_DNA"/>
</dbReference>
<dbReference type="EMBL" id="AF091888">
    <property type="protein sequence ID" value="AAF75819.1"/>
    <property type="status" value="JOINED"/>
    <property type="molecule type" value="Genomic_DNA"/>
</dbReference>
<dbReference type="EMBL" id="AF091887">
    <property type="protein sequence ID" value="AAF75819.1"/>
    <property type="status" value="JOINED"/>
    <property type="molecule type" value="Genomic_DNA"/>
</dbReference>
<dbReference type="EMBL" id="AF091886">
    <property type="protein sequence ID" value="AAF75819.1"/>
    <property type="status" value="JOINED"/>
    <property type="molecule type" value="Genomic_DNA"/>
</dbReference>
<dbReference type="EMBL" id="AF091885">
    <property type="protein sequence ID" value="AAF75819.1"/>
    <property type="status" value="JOINED"/>
    <property type="molecule type" value="Genomic_DNA"/>
</dbReference>
<dbReference type="EMBL" id="AF091884">
    <property type="protein sequence ID" value="AAF75819.1"/>
    <property type="status" value="JOINED"/>
    <property type="molecule type" value="Genomic_DNA"/>
</dbReference>
<dbReference type="EMBL" id="AF091882">
    <property type="protein sequence ID" value="AAF75819.1"/>
    <property type="status" value="JOINED"/>
    <property type="molecule type" value="Genomic_DNA"/>
</dbReference>
<dbReference type="EMBL" id="AF091880">
    <property type="protein sequence ID" value="AAF75819.1"/>
    <property type="status" value="JOINED"/>
    <property type="molecule type" value="Genomic_DNA"/>
</dbReference>
<dbReference type="EMBL" id="AF091878">
    <property type="protein sequence ID" value="AAF75819.1"/>
    <property type="status" value="JOINED"/>
    <property type="molecule type" value="Genomic_DNA"/>
</dbReference>
<dbReference type="EMBL" id="AY481573">
    <property type="protein sequence ID" value="AAS47698.1"/>
    <property type="molecule type" value="mRNA"/>
</dbReference>
<dbReference type="EMBL" id="AC092799">
    <property type="status" value="NOT_ANNOTATED_CDS"/>
    <property type="molecule type" value="Genomic_DNA"/>
</dbReference>
<dbReference type="EMBL" id="AC093581">
    <property type="status" value="NOT_ANNOTATED_CDS"/>
    <property type="molecule type" value="Genomic_DNA"/>
</dbReference>
<dbReference type="EMBL" id="AC119429">
    <property type="status" value="NOT_ANNOTATED_CDS"/>
    <property type="molecule type" value="Genomic_DNA"/>
</dbReference>
<dbReference type="EMBL" id="AC138024">
    <property type="status" value="NOT_ANNOTATED_CDS"/>
    <property type="molecule type" value="Genomic_DNA"/>
</dbReference>
<dbReference type="EMBL" id="AL139259">
    <property type="status" value="NOT_ANNOTATED_CDS"/>
    <property type="molecule type" value="Genomic_DNA"/>
</dbReference>
<dbReference type="EMBL" id="AL358452">
    <property type="status" value="NOT_ANNOTATED_CDS"/>
    <property type="molecule type" value="Genomic_DNA"/>
</dbReference>
<dbReference type="EMBL" id="AL358858">
    <property type="status" value="NOT_ANNOTATED_CDS"/>
    <property type="molecule type" value="Genomic_DNA"/>
</dbReference>
<dbReference type="EMBL" id="AL445650">
    <property type="status" value="NOT_ANNOTATED_CDS"/>
    <property type="molecule type" value="Genomic_DNA"/>
</dbReference>
<dbReference type="EMBL" id="AL513305">
    <property type="status" value="NOT_ANNOTATED_CDS"/>
    <property type="molecule type" value="Genomic_DNA"/>
</dbReference>
<dbReference type="CCDS" id="CCDS1516.1">
    <molecule id="O75445-2"/>
</dbReference>
<dbReference type="CCDS" id="CCDS31025.1">
    <molecule id="O75445-1"/>
</dbReference>
<dbReference type="RefSeq" id="NP_009054.5">
    <molecule id="O75445-2"/>
    <property type="nucleotide sequence ID" value="NM_007123.5"/>
</dbReference>
<dbReference type="RefSeq" id="NP_996816.3">
    <molecule id="O75445-1"/>
    <property type="nucleotide sequence ID" value="NM_206933.4"/>
</dbReference>
<dbReference type="SMR" id="O75445"/>
<dbReference type="BioGRID" id="113242">
    <property type="interactions" value="6"/>
</dbReference>
<dbReference type="ComplexPortal" id="CPX-2821">
    <property type="entry name" value="USH2 complex"/>
</dbReference>
<dbReference type="CORUM" id="O75445"/>
<dbReference type="FunCoup" id="O75445">
    <property type="interactions" value="76"/>
</dbReference>
<dbReference type="IntAct" id="O75445">
    <property type="interactions" value="6"/>
</dbReference>
<dbReference type="STRING" id="9606.ENSP00000305941"/>
<dbReference type="GlyCosmos" id="O75445">
    <property type="glycosylation" value="66 sites, No reported glycans"/>
</dbReference>
<dbReference type="GlyGen" id="O75445">
    <property type="glycosylation" value="70 sites, 1 N-linked glycan (1 site), 1 O-linked glycan (1 site)"/>
</dbReference>
<dbReference type="iPTMnet" id="O75445"/>
<dbReference type="PhosphoSitePlus" id="O75445"/>
<dbReference type="SwissPalm" id="O75445"/>
<dbReference type="BioMuta" id="USH2A"/>
<dbReference type="jPOST" id="O75445"/>
<dbReference type="MassIVE" id="O75445"/>
<dbReference type="PaxDb" id="9606-ENSP00000305941"/>
<dbReference type="PeptideAtlas" id="O75445"/>
<dbReference type="Antibodypedia" id="53933">
    <property type="antibodies" value="74 antibodies from 12 providers"/>
</dbReference>
<dbReference type="DNASU" id="7399"/>
<dbReference type="Ensembl" id="ENST00000307340.8">
    <molecule id="O75445-1"/>
    <property type="protein sequence ID" value="ENSP00000305941.3"/>
    <property type="gene ID" value="ENSG00000042781.14"/>
</dbReference>
<dbReference type="Ensembl" id="ENST00000366942.3">
    <molecule id="O75445-2"/>
    <property type="protein sequence ID" value="ENSP00000355909.3"/>
    <property type="gene ID" value="ENSG00000042781.14"/>
</dbReference>
<dbReference type="Ensembl" id="ENST00000674083.1">
    <molecule id="O75445-3"/>
    <property type="protein sequence ID" value="ENSP00000501296.1"/>
    <property type="gene ID" value="ENSG00000042781.14"/>
</dbReference>
<dbReference type="GeneID" id="7399"/>
<dbReference type="KEGG" id="hsa:7399"/>
<dbReference type="MANE-Select" id="ENST00000307340.8">
    <property type="protein sequence ID" value="ENSP00000305941.3"/>
    <property type="RefSeq nucleotide sequence ID" value="NM_206933.4"/>
    <property type="RefSeq protein sequence ID" value="NP_996816.3"/>
</dbReference>
<dbReference type="UCSC" id="uc001hku.1">
    <molecule id="O75445-1"/>
    <property type="organism name" value="human"/>
</dbReference>
<dbReference type="AGR" id="HGNC:12601"/>
<dbReference type="CTD" id="7399"/>
<dbReference type="DisGeNET" id="7399"/>
<dbReference type="GeneCards" id="USH2A"/>
<dbReference type="GeneReviews" id="USH2A"/>
<dbReference type="HGNC" id="HGNC:12601">
    <property type="gene designation" value="USH2A"/>
</dbReference>
<dbReference type="HPA" id="ENSG00000042781">
    <property type="expression patterns" value="Group enriched (liver, retina)"/>
</dbReference>
<dbReference type="MalaCards" id="USH2A"/>
<dbReference type="MIM" id="276901">
    <property type="type" value="phenotype"/>
</dbReference>
<dbReference type="MIM" id="608400">
    <property type="type" value="gene"/>
</dbReference>
<dbReference type="MIM" id="613809">
    <property type="type" value="phenotype"/>
</dbReference>
<dbReference type="neXtProt" id="NX_O75445"/>
<dbReference type="OpenTargets" id="ENSG00000042781"/>
<dbReference type="Orphanet" id="791">
    <property type="disease" value="Retinitis pigmentosa"/>
</dbReference>
<dbReference type="Orphanet" id="231178">
    <property type="disease" value="Usher syndrome type 2"/>
</dbReference>
<dbReference type="PharmGKB" id="PA37228"/>
<dbReference type="VEuPathDB" id="HostDB:ENSG00000042781"/>
<dbReference type="eggNOG" id="KOG1836">
    <property type="taxonomic scope" value="Eukaryota"/>
</dbReference>
<dbReference type="eggNOG" id="KOG3510">
    <property type="taxonomic scope" value="Eukaryota"/>
</dbReference>
<dbReference type="eggNOG" id="KOG3513">
    <property type="taxonomic scope" value="Eukaryota"/>
</dbReference>
<dbReference type="GeneTree" id="ENSGT00940000158456"/>
<dbReference type="HOGENOM" id="CLU_000067_0_0_1"/>
<dbReference type="InParanoid" id="O75445"/>
<dbReference type="OMA" id="LYMDGML"/>
<dbReference type="OrthoDB" id="5984158at2759"/>
<dbReference type="PAN-GO" id="O75445">
    <property type="GO annotations" value="5 GO annotations based on evolutionary models"/>
</dbReference>
<dbReference type="PhylomeDB" id="O75445"/>
<dbReference type="TreeFam" id="TF330287"/>
<dbReference type="PathwayCommons" id="O75445"/>
<dbReference type="SignaLink" id="O75445"/>
<dbReference type="BioGRID-ORCS" id="7399">
    <property type="hits" value="7 hits in 1139 CRISPR screens"/>
</dbReference>
<dbReference type="ChiTaRS" id="USH2A">
    <property type="organism name" value="human"/>
</dbReference>
<dbReference type="GeneWiki" id="USH2A"/>
<dbReference type="GenomeRNAi" id="7399"/>
<dbReference type="Pharos" id="O75445">
    <property type="development level" value="Tbio"/>
</dbReference>
<dbReference type="PRO" id="PR:O75445"/>
<dbReference type="Proteomes" id="UP000005640">
    <property type="component" value="Chromosome 1"/>
</dbReference>
<dbReference type="RNAct" id="O75445">
    <property type="molecule type" value="protein"/>
</dbReference>
<dbReference type="Bgee" id="ENSG00000042781">
    <property type="expression patterns" value="Expressed in male germ line stem cell (sensu Vertebrata) in testis and 17 other cell types or tissues"/>
</dbReference>
<dbReference type="GO" id="GO:0016324">
    <property type="term" value="C:apical plasma membrane"/>
    <property type="evidence" value="ECO:0000250"/>
    <property type="project" value="BHF-UCL"/>
</dbReference>
<dbReference type="GO" id="GO:0005604">
    <property type="term" value="C:basement membrane"/>
    <property type="evidence" value="ECO:0000314"/>
    <property type="project" value="HGNC-UCL"/>
</dbReference>
<dbReference type="GO" id="GO:0036064">
    <property type="term" value="C:ciliary basal body"/>
    <property type="evidence" value="ECO:0007669"/>
    <property type="project" value="Ensembl"/>
</dbReference>
<dbReference type="GO" id="GO:0005737">
    <property type="term" value="C:cytoplasm"/>
    <property type="evidence" value="ECO:0000314"/>
    <property type="project" value="HGNC-UCL"/>
</dbReference>
<dbReference type="GO" id="GO:0005576">
    <property type="term" value="C:extracellular region"/>
    <property type="evidence" value="ECO:0007669"/>
    <property type="project" value="UniProtKB-SubCell"/>
</dbReference>
<dbReference type="GO" id="GO:1990075">
    <property type="term" value="C:periciliary membrane compartment"/>
    <property type="evidence" value="ECO:0000250"/>
    <property type="project" value="UniProtKB"/>
</dbReference>
<dbReference type="GO" id="GO:0032391">
    <property type="term" value="C:photoreceptor connecting cilium"/>
    <property type="evidence" value="ECO:0007669"/>
    <property type="project" value="Ensembl"/>
</dbReference>
<dbReference type="GO" id="GO:0001917">
    <property type="term" value="C:photoreceptor inner segment"/>
    <property type="evidence" value="ECO:0007669"/>
    <property type="project" value="Ensembl"/>
</dbReference>
<dbReference type="GO" id="GO:0002141">
    <property type="term" value="C:stereocilia ankle link"/>
    <property type="evidence" value="ECO:0000250"/>
    <property type="project" value="UniProtKB"/>
</dbReference>
<dbReference type="GO" id="GO:0002142">
    <property type="term" value="C:stereocilia ankle link complex"/>
    <property type="evidence" value="ECO:0000250"/>
    <property type="project" value="UniProtKB"/>
</dbReference>
<dbReference type="GO" id="GO:0032421">
    <property type="term" value="C:stereocilium bundle"/>
    <property type="evidence" value="ECO:0000250"/>
    <property type="project" value="BHF-UCL"/>
</dbReference>
<dbReference type="GO" id="GO:0060171">
    <property type="term" value="C:stereocilium membrane"/>
    <property type="evidence" value="ECO:0000250"/>
    <property type="project" value="BHF-UCL"/>
</dbReference>
<dbReference type="GO" id="GO:1990696">
    <property type="term" value="C:USH2 complex"/>
    <property type="evidence" value="ECO:0000250"/>
    <property type="project" value="UniProtKB"/>
</dbReference>
<dbReference type="GO" id="GO:0005518">
    <property type="term" value="F:collagen binding"/>
    <property type="evidence" value="ECO:0000314"/>
    <property type="project" value="HGNC-UCL"/>
</dbReference>
<dbReference type="GO" id="GO:0042802">
    <property type="term" value="F:identical protein binding"/>
    <property type="evidence" value="ECO:0007669"/>
    <property type="project" value="Ensembl"/>
</dbReference>
<dbReference type="GO" id="GO:0017022">
    <property type="term" value="F:myosin binding"/>
    <property type="evidence" value="ECO:0000250"/>
    <property type="project" value="BHF-UCL"/>
</dbReference>
<dbReference type="GO" id="GO:0051649">
    <property type="term" value="P:establishment of localization in cell"/>
    <property type="evidence" value="ECO:0007669"/>
    <property type="project" value="Ensembl"/>
</dbReference>
<dbReference type="GO" id="GO:0045184">
    <property type="term" value="P:establishment of protein localization"/>
    <property type="evidence" value="ECO:0000250"/>
    <property type="project" value="UniProtKB"/>
</dbReference>
<dbReference type="GO" id="GO:0035315">
    <property type="term" value="P:hair cell differentiation"/>
    <property type="evidence" value="ECO:0000250"/>
    <property type="project" value="BHF-UCL"/>
</dbReference>
<dbReference type="GO" id="GO:0042491">
    <property type="term" value="P:inner ear auditory receptor cell differentiation"/>
    <property type="evidence" value="ECO:0007669"/>
    <property type="project" value="Ensembl"/>
</dbReference>
<dbReference type="GO" id="GO:0060113">
    <property type="term" value="P:inner ear receptor cell differentiation"/>
    <property type="evidence" value="ECO:0000250"/>
    <property type="project" value="BHF-UCL"/>
</dbReference>
<dbReference type="GO" id="GO:0048496">
    <property type="term" value="P:maintenance of animal organ identity"/>
    <property type="evidence" value="ECO:0000315"/>
    <property type="project" value="HGNC-UCL"/>
</dbReference>
<dbReference type="GO" id="GO:0045494">
    <property type="term" value="P:photoreceptor cell maintenance"/>
    <property type="evidence" value="ECO:0000315"/>
    <property type="project" value="HGNC-UCL"/>
</dbReference>
<dbReference type="GO" id="GO:0050953">
    <property type="term" value="P:sensory perception of light stimulus"/>
    <property type="evidence" value="ECO:0000315"/>
    <property type="project" value="HGNC-UCL"/>
</dbReference>
<dbReference type="GO" id="GO:0007605">
    <property type="term" value="P:sensory perception of sound"/>
    <property type="evidence" value="ECO:0000315"/>
    <property type="project" value="HGNC-UCL"/>
</dbReference>
<dbReference type="GO" id="GO:0007601">
    <property type="term" value="P:visual perception"/>
    <property type="evidence" value="ECO:0007669"/>
    <property type="project" value="UniProtKB-KW"/>
</dbReference>
<dbReference type="CDD" id="cd00055">
    <property type="entry name" value="EGF_Lam"/>
    <property type="match status" value="10"/>
</dbReference>
<dbReference type="CDD" id="cd00063">
    <property type="entry name" value="FN3"/>
    <property type="match status" value="30"/>
</dbReference>
<dbReference type="CDD" id="cd00110">
    <property type="entry name" value="LamG"/>
    <property type="match status" value="2"/>
</dbReference>
<dbReference type="FunFam" id="2.10.25.10:FF:000090">
    <property type="entry name" value="laminin subunit alpha"/>
    <property type="match status" value="2"/>
</dbReference>
<dbReference type="FunFam" id="2.10.25.10:FF:000094">
    <property type="entry name" value="Laminin subunit alpha-2"/>
    <property type="match status" value="1"/>
</dbReference>
<dbReference type="FunFam" id="2.10.25.10:FF:000224">
    <property type="entry name" value="Usherin"/>
    <property type="match status" value="1"/>
</dbReference>
<dbReference type="FunFam" id="2.10.25.10:FF:000313">
    <property type="entry name" value="Usherin"/>
    <property type="match status" value="1"/>
</dbReference>
<dbReference type="FunFam" id="2.10.25.10:FF:000412">
    <property type="entry name" value="Usherin"/>
    <property type="match status" value="1"/>
</dbReference>
<dbReference type="FunFam" id="2.60.120.200:FF:000111">
    <property type="entry name" value="Usherin"/>
    <property type="match status" value="1"/>
</dbReference>
<dbReference type="FunFam" id="2.60.120.200:FF:000125">
    <property type="entry name" value="Usherin"/>
    <property type="match status" value="1"/>
</dbReference>
<dbReference type="FunFam" id="2.60.120.260:FF:000069">
    <property type="entry name" value="Usherin"/>
    <property type="match status" value="1"/>
</dbReference>
<dbReference type="FunFam" id="2.60.40.10:FF:000819">
    <property type="entry name" value="Usherin"/>
    <property type="match status" value="1"/>
</dbReference>
<dbReference type="FunFam" id="2.60.40.10:FF:000915">
    <property type="entry name" value="Usherin"/>
    <property type="match status" value="1"/>
</dbReference>
<dbReference type="FunFam" id="2.60.40.10:FF:000991">
    <property type="entry name" value="Usherin"/>
    <property type="match status" value="1"/>
</dbReference>
<dbReference type="FunFam" id="2.60.40.10:FF:001004">
    <property type="entry name" value="Usherin"/>
    <property type="match status" value="1"/>
</dbReference>
<dbReference type="FunFam" id="2.60.40.10:FF:001030">
    <property type="entry name" value="Usherin"/>
    <property type="match status" value="1"/>
</dbReference>
<dbReference type="FunFam" id="2.60.40.10:FF:001037">
    <property type="entry name" value="Usherin"/>
    <property type="match status" value="1"/>
</dbReference>
<dbReference type="FunFam" id="2.60.40.10:FF:001052">
    <property type="entry name" value="Usherin"/>
    <property type="match status" value="1"/>
</dbReference>
<dbReference type="FunFam" id="2.60.40.10:FF:001085">
    <property type="entry name" value="Usherin"/>
    <property type="match status" value="1"/>
</dbReference>
<dbReference type="FunFam" id="2.60.40.10:FF:001099">
    <property type="entry name" value="Usherin"/>
    <property type="match status" value="1"/>
</dbReference>
<dbReference type="FunFam" id="2.60.40.10:FF:001100">
    <property type="entry name" value="Usherin"/>
    <property type="match status" value="1"/>
</dbReference>
<dbReference type="FunFam" id="2.60.40.10:FF:001135">
    <property type="entry name" value="Usherin"/>
    <property type="match status" value="1"/>
</dbReference>
<dbReference type="FunFam" id="2.60.40.10:FF:001161">
    <property type="entry name" value="Usherin"/>
    <property type="match status" value="1"/>
</dbReference>
<dbReference type="FunFam" id="2.60.40.10:FF:001168">
    <property type="entry name" value="Usherin"/>
    <property type="match status" value="1"/>
</dbReference>
<dbReference type="FunFam" id="2.60.40.10:FF:001172">
    <property type="entry name" value="Usherin"/>
    <property type="match status" value="1"/>
</dbReference>
<dbReference type="FunFam" id="2.60.40.10:FF:001173">
    <property type="entry name" value="Usherin"/>
    <property type="match status" value="1"/>
</dbReference>
<dbReference type="FunFam" id="2.60.40.10:FF:001176">
    <property type="entry name" value="Usherin"/>
    <property type="match status" value="1"/>
</dbReference>
<dbReference type="FunFam" id="2.60.40.10:FF:001201">
    <property type="entry name" value="Usherin"/>
    <property type="match status" value="1"/>
</dbReference>
<dbReference type="FunFam" id="2.60.40.10:FF:001211">
    <property type="entry name" value="Usherin"/>
    <property type="match status" value="1"/>
</dbReference>
<dbReference type="FunFam" id="2.60.40.10:FF:001227">
    <property type="entry name" value="Usherin"/>
    <property type="match status" value="1"/>
</dbReference>
<dbReference type="FunFam" id="2.60.40.10:FF:001236">
    <property type="entry name" value="Usherin"/>
    <property type="match status" value="1"/>
</dbReference>
<dbReference type="FunFam" id="2.60.40.10:FF:001276">
    <property type="entry name" value="Usherin"/>
    <property type="match status" value="1"/>
</dbReference>
<dbReference type="FunFam" id="2.60.40.10:FF:001285">
    <property type="entry name" value="Usherin"/>
    <property type="match status" value="1"/>
</dbReference>
<dbReference type="FunFam" id="2.60.40.10:FF:001296">
    <property type="entry name" value="Usherin"/>
    <property type="match status" value="1"/>
</dbReference>
<dbReference type="FunFam" id="2.60.40.10:FF:001379">
    <property type="entry name" value="Usherin"/>
    <property type="match status" value="1"/>
</dbReference>
<dbReference type="FunFam" id="2.60.40.10:FF:001390">
    <property type="entry name" value="Usherin"/>
    <property type="match status" value="1"/>
</dbReference>
<dbReference type="FunFam" id="2.60.40.10:FF:001416">
    <property type="entry name" value="Usherin"/>
    <property type="match status" value="1"/>
</dbReference>
<dbReference type="FunFam" id="2.60.40.10:FF:001716">
    <property type="entry name" value="Usherin"/>
    <property type="match status" value="1"/>
</dbReference>
<dbReference type="FunFam" id="2.60.40.10:FF:001882">
    <property type="entry name" value="Usherin"/>
    <property type="match status" value="1"/>
</dbReference>
<dbReference type="FunFam" id="2.60.40.10:FF:001945">
    <property type="entry name" value="Usherin"/>
    <property type="match status" value="1"/>
</dbReference>
<dbReference type="FunFam" id="2.10.25.10:FF:000275">
    <property type="entry name" value="usherin"/>
    <property type="match status" value="1"/>
</dbReference>
<dbReference type="FunFam" id="2.10.25.10:FF:000330">
    <property type="entry name" value="usherin"/>
    <property type="match status" value="1"/>
</dbReference>
<dbReference type="FunFam" id="2.10.25.10:FF:000376">
    <property type="entry name" value="usherin"/>
    <property type="match status" value="1"/>
</dbReference>
<dbReference type="FunFam" id="2.60.120.200:FF:000126">
    <property type="entry name" value="usherin"/>
    <property type="match status" value="1"/>
</dbReference>
<dbReference type="FunFam" id="2.60.40.10:FF:001023">
    <property type="entry name" value="usherin"/>
    <property type="match status" value="1"/>
</dbReference>
<dbReference type="FunFam" id="2.60.40.10:FF:001251">
    <property type="entry name" value="usherin"/>
    <property type="match status" value="1"/>
</dbReference>
<dbReference type="FunFam" id="2.60.40.10:FF:001255">
    <property type="entry name" value="usherin"/>
    <property type="match status" value="1"/>
</dbReference>
<dbReference type="Gene3D" id="2.60.120.200">
    <property type="match status" value="3"/>
</dbReference>
<dbReference type="Gene3D" id="2.60.120.260">
    <property type="entry name" value="Galactose-binding domain-like"/>
    <property type="match status" value="1"/>
</dbReference>
<dbReference type="Gene3D" id="2.60.40.10">
    <property type="entry name" value="Immunoglobulins"/>
    <property type="match status" value="33"/>
</dbReference>
<dbReference type="Gene3D" id="2.10.25.10">
    <property type="entry name" value="Laminin"/>
    <property type="match status" value="9"/>
</dbReference>
<dbReference type="InterPro" id="IPR013320">
    <property type="entry name" value="ConA-like_dom_sf"/>
</dbReference>
<dbReference type="InterPro" id="IPR003961">
    <property type="entry name" value="FN3_dom"/>
</dbReference>
<dbReference type="InterPro" id="IPR036116">
    <property type="entry name" value="FN3_sf"/>
</dbReference>
<dbReference type="InterPro" id="IPR013783">
    <property type="entry name" value="Ig-like_fold"/>
</dbReference>
<dbReference type="InterPro" id="IPR006558">
    <property type="entry name" value="LamG-like"/>
</dbReference>
<dbReference type="InterPro" id="IPR001791">
    <property type="entry name" value="Laminin_G"/>
</dbReference>
<dbReference type="InterPro" id="IPR008211">
    <property type="entry name" value="Laminin_N"/>
</dbReference>
<dbReference type="InterPro" id="IPR002049">
    <property type="entry name" value="LE_dom"/>
</dbReference>
<dbReference type="InterPro" id="IPR050713">
    <property type="entry name" value="RTP_Phos/Ushers"/>
</dbReference>
<dbReference type="PANTHER" id="PTHR46957">
    <property type="entry name" value="CYTOKINE RECEPTOR"/>
    <property type="match status" value="1"/>
</dbReference>
<dbReference type="PANTHER" id="PTHR46957:SF7">
    <property type="entry name" value="USHERIN"/>
    <property type="match status" value="1"/>
</dbReference>
<dbReference type="Pfam" id="PF00053">
    <property type="entry name" value="EGF_laminin"/>
    <property type="match status" value="10"/>
</dbReference>
<dbReference type="Pfam" id="PF00041">
    <property type="entry name" value="fn3"/>
    <property type="match status" value="18"/>
</dbReference>
<dbReference type="Pfam" id="PF02210">
    <property type="entry name" value="Laminin_G_2"/>
    <property type="match status" value="2"/>
</dbReference>
<dbReference type="Pfam" id="PF13385">
    <property type="entry name" value="Laminin_G_3"/>
    <property type="match status" value="1"/>
</dbReference>
<dbReference type="Pfam" id="PF00055">
    <property type="entry name" value="Laminin_N"/>
    <property type="match status" value="1"/>
</dbReference>
<dbReference type="PRINTS" id="PR00011">
    <property type="entry name" value="EGFLAMININ"/>
</dbReference>
<dbReference type="SMART" id="SM00180">
    <property type="entry name" value="EGF_Lam"/>
    <property type="match status" value="10"/>
</dbReference>
<dbReference type="SMART" id="SM00060">
    <property type="entry name" value="FN3"/>
    <property type="match status" value="33"/>
</dbReference>
<dbReference type="SMART" id="SM00282">
    <property type="entry name" value="LamG"/>
    <property type="match status" value="2"/>
</dbReference>
<dbReference type="SMART" id="SM00560">
    <property type="entry name" value="LamGL"/>
    <property type="match status" value="1"/>
</dbReference>
<dbReference type="SMART" id="SM00136">
    <property type="entry name" value="LamNT"/>
    <property type="match status" value="1"/>
</dbReference>
<dbReference type="SUPFAM" id="SSF49899">
    <property type="entry name" value="Concanavalin A-like lectins/glucanases"/>
    <property type="match status" value="3"/>
</dbReference>
<dbReference type="SUPFAM" id="SSF57196">
    <property type="entry name" value="EGF/Laminin"/>
    <property type="match status" value="9"/>
</dbReference>
<dbReference type="SUPFAM" id="SSF49265">
    <property type="entry name" value="Fibronectin type III"/>
    <property type="match status" value="22"/>
</dbReference>
<dbReference type="PROSITE" id="PS00022">
    <property type="entry name" value="EGF_1"/>
    <property type="match status" value="7"/>
</dbReference>
<dbReference type="PROSITE" id="PS01248">
    <property type="entry name" value="EGF_LAM_1"/>
    <property type="match status" value="7"/>
</dbReference>
<dbReference type="PROSITE" id="PS50027">
    <property type="entry name" value="EGF_LAM_2"/>
    <property type="match status" value="10"/>
</dbReference>
<dbReference type="PROSITE" id="PS50853">
    <property type="entry name" value="FN3"/>
    <property type="match status" value="35"/>
</dbReference>
<dbReference type="PROSITE" id="PS50025">
    <property type="entry name" value="LAM_G_DOMAIN"/>
    <property type="match status" value="2"/>
</dbReference>
<dbReference type="PROSITE" id="PS51117">
    <property type="entry name" value="LAMININ_NTER"/>
    <property type="match status" value="1"/>
</dbReference>
<gene>
    <name type="primary">USH2A</name>
</gene>
<proteinExistence type="evidence at protein level"/>
<keyword id="KW-0025">Alternative splicing</keyword>
<keyword id="KW-1003">Cell membrane</keyword>
<keyword id="KW-0966">Cell projection</keyword>
<keyword id="KW-0209">Deafness</keyword>
<keyword id="KW-0225">Disease variant</keyword>
<keyword id="KW-1015">Disulfide bond</keyword>
<keyword id="KW-0325">Glycoprotein</keyword>
<keyword id="KW-1009">Hearing</keyword>
<keyword id="KW-0424">Laminin EGF-like domain</keyword>
<keyword id="KW-0472">Membrane</keyword>
<keyword id="KW-1267">Proteomics identification</keyword>
<keyword id="KW-1185">Reference proteome</keyword>
<keyword id="KW-0677">Repeat</keyword>
<keyword id="KW-0682">Retinitis pigmentosa</keyword>
<keyword id="KW-0964">Secreted</keyword>
<keyword id="KW-0716">Sensory transduction</keyword>
<keyword id="KW-0732">Signal</keyword>
<keyword id="KW-0812">Transmembrane</keyword>
<keyword id="KW-1133">Transmembrane helix</keyword>
<keyword id="KW-0836">Usher syndrome</keyword>
<keyword id="KW-0844">Vision</keyword>
<comment type="function">
    <text evidence="2">Involved in hearing and vision as member of the USH2 complex. In the inner ear, required for the maintenance of the hair bundle ankle formation, which connects growing stereocilia in developing cochlear hair cells. In retina photoreceptors, the USH2 complex is required for the maintenance of periciliary membrane complex that seems to play a role in regulating intracellular protein transport.</text>
</comment>
<comment type="subunit">
    <text evidence="2 19 26 27 28 34 38">Interacts with collagen IV and fibronectin via its laminin EGF-like domains. Interaction with collagen may be required for stable integration into the basement membrane (PubMed:14676276, PubMed:16114888). Interacts with NINL (PubMed:18826961). Interacts with USH1C (PubMed:16301216). Component of USH2 complex, composed of ADGRV1, PDZD7, USH2A and WHRN. Interacts with ADGRV1/MASS1 (via N-terminal PDZ domain). Interacts (via the cytoplasmic region) with WHRN (PubMed:16434480). Interacts (via the cytoplasmic region) with PDZD7 (PubMed:20440071). Interacts (via the cytoplasmic region) with VEZT and MYO7A (via MyTH4-FERM domains); the interaction associates VEZT with the USH2 complex at the stereocilia base (By similarity).</text>
</comment>
<comment type="interaction">
    <interactant intactId="EBI-9996372">
        <id>O75445</id>
    </interactant>
    <interactant intactId="EBI-20859318">
        <id>Q9H5P4</id>
        <label>PDZD7</label>
    </interactant>
    <organismsDiffer>false</organismsDiffer>
    <experiments>2</experiments>
</comment>
<comment type="interaction">
    <interactant intactId="EBI-11621644">
        <id>O75445-1</id>
    </interactant>
    <interactant intactId="EBI-11523636">
        <id>Q9Y6N9-4</id>
        <label>USH1C</label>
    </interactant>
    <organismsDiffer>false</organismsDiffer>
    <experiments>3</experiments>
</comment>
<comment type="interaction">
    <interactant intactId="EBI-11621644">
        <id>O75445-1</id>
    </interactant>
    <interactant intactId="EBI-7418919">
        <id>Q9ES64-3</id>
        <label>Ush1c</label>
    </interactant>
    <organismsDiffer>true</organismsDiffer>
    <experiments>2</experiments>
</comment>
<comment type="subcellular location">
    <subcellularLocation>
        <location evidence="19">Cell projection</location>
        <location evidence="19">Stereocilium membrane</location>
        <topology evidence="19">Single-pass type I membrane protein</topology>
    </subcellularLocation>
    <text evidence="2">Component of the interstereocilia ankle links in the inner ear sensory cells. In photoreceptors, localizes at a plasma membrane microdomain in the apical inner segment that surrounds the connecting cilia called periciliary membrane complex.</text>
</comment>
<comment type="subcellular location">
    <molecule>Isoform 2</molecule>
    <subcellularLocation>
        <location>Secreted</location>
    </subcellularLocation>
</comment>
<comment type="alternative products">
    <event type="alternative splicing"/>
    <isoform>
        <id>O75445-1</id>
        <name>1</name>
        <name>b</name>
        <sequence type="displayed"/>
    </isoform>
    <isoform>
        <id>O75445-2</id>
        <name>2</name>
        <sequence type="described" ref="VSP_017771 VSP_017772"/>
    </isoform>
    <isoform>
        <id>O75445-3</id>
        <name>3</name>
        <sequence type="described" ref="VSP_017773"/>
    </isoform>
</comment>
<comment type="tissue specificity">
    <text evidence="14 17 21 51">Present in the basement membrane of many, but not all tissues. Expressed in retina, cochlea, small and large intestine, pancreas, bladder, prostate, esophagus, trachea, thymus, salivary glands, placenta, ovary, fallopian tube, uterus and testis. Absent in many other tissues such as heart, lung, liver, kidney and brain. In the retina, it is present in the basement membranes in the Bruch's layer choroid capillary basement membranes, where it localizes just beneath the retinal pigment epithelial cells (at protein level). Weakly expressed. Isoform 2 is expressed in fetal eye, cochlea and heart, and at very low level in brain, CNS, intestine, skeleton, tongue, kidney and lung. Isoform 2 is not expressed in stomach and liver. In adult tissues, isoform 2 is expressed in neural retina and testis, and at low level in brain, heart, kidney and liver. Isoform 1 displays a similar pattern of expression but is expressed at very low level in fetal cochlea.</text>
</comment>
<comment type="domain">
    <text evidence="2">The PDZ-binding motif probably mediates the association with some of the PDZ domains of USH1C and WHRN.</text>
</comment>
<comment type="disease" evidence="9 10 12 13 15 18 20 21 22 23 24 29 31 32 33 35 36 37 38 39 41 42 44 46 49 51">
    <disease id="DI-01118">
        <name>Usher syndrome 2A</name>
        <acronym>USH2A</acronym>
        <description>USH is a genetically heterogeneous condition characterized by the association of retinitis pigmentosa with sensorineural deafness. Age at onset and differences in auditory and vestibular function distinguish Usher syndrome type 1 (USH1), Usher syndrome type 2 (USH2) and Usher syndrome type 3 (USH3). USH2 is characterized by congenital mild hearing impairment with normal vestibular responses.</description>
        <dbReference type="MIM" id="276901"/>
    </disease>
    <text>The disease is caused by variants affecting the gene represented in this entry.</text>
</comment>
<comment type="disease" evidence="11 15 16 20 24 25 30 39 42 45 47">
    <disease id="DI-00994">
        <name>Retinitis pigmentosa 39</name>
        <acronym>RP39</acronym>
        <description>A retinal dystrophy belonging to the group of pigmentary retinopathies. Retinitis pigmentosa is characterized by retinal pigment deposits visible on fundus examination and primary loss of rod photoreceptor cells followed by secondary loss of cone photoreceptors. Patients typically have night vision blindness and loss of midperipheral visual field. As their condition progresses, they lose their far peripheral visual field and eventually central vision as well.</description>
        <dbReference type="MIM" id="613809"/>
    </disease>
    <text>The disease is caused by variants affecting the gene represented in this entry.</text>
</comment>
<comment type="disease">
    <text evidence="48">Defects in USH2A has been found in a patient with a form of non-syndromic sensorineural hearing loss.</text>
</comment>
<organism>
    <name type="scientific">Homo sapiens</name>
    <name type="common">Human</name>
    <dbReference type="NCBI Taxonomy" id="9606"/>
    <lineage>
        <taxon>Eukaryota</taxon>
        <taxon>Metazoa</taxon>
        <taxon>Chordata</taxon>
        <taxon>Craniata</taxon>
        <taxon>Vertebrata</taxon>
        <taxon>Euteleostomi</taxon>
        <taxon>Mammalia</taxon>
        <taxon>Eutheria</taxon>
        <taxon>Euarchontoglires</taxon>
        <taxon>Primates</taxon>
        <taxon>Haplorrhini</taxon>
        <taxon>Catarrhini</taxon>
        <taxon>Hominidae</taxon>
        <taxon>Homo</taxon>
    </lineage>
</organism>
<feature type="signal peptide" evidence="3">
    <location>
        <begin position="1"/>
        <end position="31"/>
    </location>
</feature>
<feature type="chain" id="PRO_0000229804" description="Usherin">
    <location>
        <begin position="32"/>
        <end position="5202"/>
    </location>
</feature>
<feature type="topological domain" description="Extracellular" evidence="3">
    <location>
        <begin position="32"/>
        <end position="5042"/>
    </location>
</feature>
<feature type="transmembrane region" description="Helical" evidence="3">
    <location>
        <begin position="5043"/>
        <end position="5063"/>
    </location>
</feature>
<feature type="topological domain" description="Cytoplasmic" evidence="3">
    <location>
        <begin position="5064"/>
        <end position="5202"/>
    </location>
</feature>
<feature type="domain" description="Laminin N-terminal" evidence="7">
    <location>
        <begin position="271"/>
        <end position="517"/>
    </location>
</feature>
<feature type="domain" description="Laminin EGF-like 1" evidence="6">
    <location>
        <begin position="518"/>
        <end position="574"/>
    </location>
</feature>
<feature type="domain" description="Laminin EGF-like 2" evidence="6">
    <location>
        <begin position="575"/>
        <end position="640"/>
    </location>
</feature>
<feature type="domain" description="Laminin EGF-like 3" evidence="6">
    <location>
        <begin position="641"/>
        <end position="693"/>
    </location>
</feature>
<feature type="domain" description="Laminin EGF-like 4" evidence="6">
    <location>
        <begin position="694"/>
        <end position="746"/>
    </location>
</feature>
<feature type="domain" description="Laminin EGF-like 5" evidence="6">
    <location>
        <begin position="747"/>
        <end position="794"/>
    </location>
</feature>
<feature type="domain" description="Laminin EGF-like 6" evidence="6">
    <location>
        <begin position="795"/>
        <end position="846"/>
    </location>
</feature>
<feature type="domain" description="Laminin EGF-like 7" evidence="6">
    <location>
        <begin position="847"/>
        <end position="899"/>
    </location>
</feature>
<feature type="domain" description="Laminin EGF-like 8" evidence="6">
    <location>
        <begin position="900"/>
        <end position="950"/>
    </location>
</feature>
<feature type="domain" description="Laminin EGF-like 9" evidence="6">
    <location>
        <begin position="951"/>
        <end position="1001"/>
    </location>
</feature>
<feature type="domain" description="Laminin EGF-like 10" evidence="6">
    <location>
        <begin position="1002"/>
        <end position="1052"/>
    </location>
</feature>
<feature type="domain" description="Fibronectin type-III 1" evidence="5">
    <location>
        <begin position="1058"/>
        <end position="1146"/>
    </location>
</feature>
<feature type="domain" description="Fibronectin type-III 2" evidence="5">
    <location>
        <begin position="1148"/>
        <end position="1244"/>
    </location>
</feature>
<feature type="domain" description="Fibronectin type-III 3" evidence="5">
    <location>
        <begin position="1245"/>
        <end position="1363"/>
    </location>
</feature>
<feature type="domain" description="Fibronectin type-III 4" evidence="5">
    <location>
        <begin position="1364"/>
        <end position="1468"/>
    </location>
</feature>
<feature type="domain" description="Laminin G-like 1" evidence="4">
    <location>
        <begin position="1517"/>
        <end position="1709"/>
    </location>
</feature>
<feature type="domain" description="Laminin G-like 2" evidence="4">
    <location>
        <begin position="1714"/>
        <end position="1891"/>
    </location>
</feature>
<feature type="domain" description="Fibronectin type-III 5" evidence="5">
    <location>
        <begin position="1869"/>
        <end position="1955"/>
    </location>
</feature>
<feature type="domain" description="Fibronectin type-III 6" evidence="5">
    <location>
        <begin position="1957"/>
        <end position="2054"/>
    </location>
</feature>
<feature type="domain" description="Fibronectin type-III 7" evidence="5">
    <location>
        <begin position="2055"/>
        <end position="2144"/>
    </location>
</feature>
<feature type="domain" description="Fibronectin type-III 8" evidence="5">
    <location>
        <begin position="2145"/>
        <end position="2239"/>
    </location>
</feature>
<feature type="domain" description="Fibronectin type-III 9" evidence="5">
    <location>
        <begin position="2243"/>
        <end position="2330"/>
    </location>
</feature>
<feature type="domain" description="Fibronectin type-III 10" evidence="5">
    <location>
        <begin position="2331"/>
        <end position="2433"/>
    </location>
</feature>
<feature type="domain" description="Fibronectin type-III 11" evidence="5">
    <location>
        <begin position="2437"/>
        <end position="2531"/>
    </location>
</feature>
<feature type="domain" description="Fibronectin type-III 12" evidence="5">
    <location>
        <begin position="2535"/>
        <end position="2622"/>
    </location>
</feature>
<feature type="domain" description="Fibronectin type-III 13" evidence="5">
    <location>
        <begin position="2624"/>
        <end position="2722"/>
    </location>
</feature>
<feature type="domain" description="Fibronectin type-III 14" evidence="5">
    <location>
        <begin position="2726"/>
        <end position="2819"/>
    </location>
</feature>
<feature type="domain" description="Fibronectin type-III 15" evidence="5">
    <location>
        <begin position="2820"/>
        <end position="2923"/>
    </location>
</feature>
<feature type="domain" description="Fibronectin type-III 16" evidence="5">
    <location>
        <begin position="2927"/>
        <end position="3018"/>
    </location>
</feature>
<feature type="domain" description="Fibronectin type-III 17" evidence="5">
    <location>
        <begin position="3022"/>
        <end position="3112"/>
    </location>
</feature>
<feature type="domain" description="Fibronectin type-III 18" evidence="5">
    <location>
        <begin position="3113"/>
        <end position="3209"/>
    </location>
</feature>
<feature type="domain" description="Fibronectin type-III 19" evidence="5">
    <location>
        <begin position="3403"/>
        <end position="3497"/>
    </location>
</feature>
<feature type="domain" description="Fibronectin type-III 20" evidence="5">
    <location>
        <begin position="3501"/>
        <end position="3589"/>
    </location>
</feature>
<feature type="domain" description="Fibronectin type-III 21" evidence="5">
    <location>
        <begin position="3592"/>
        <end position="3682"/>
    </location>
</feature>
<feature type="domain" description="Fibronectin type-III 22" evidence="5">
    <location>
        <begin position="3684"/>
        <end position="3770"/>
    </location>
</feature>
<feature type="domain" description="Fibronectin type-III 23" evidence="5">
    <location>
        <begin position="3774"/>
        <end position="3865"/>
    </location>
</feature>
<feature type="domain" description="Fibronectin type-III 24" evidence="5">
    <location>
        <begin position="3866"/>
        <end position="3963"/>
    </location>
</feature>
<feature type="domain" description="Fibronectin type-III 25" evidence="5">
    <location>
        <begin position="3964"/>
        <end position="4067"/>
    </location>
</feature>
<feature type="domain" description="Fibronectin type-III 26" evidence="5">
    <location>
        <begin position="4068"/>
        <end position="4153"/>
    </location>
</feature>
<feature type="domain" description="Fibronectin type-III 27" evidence="5">
    <location>
        <begin position="4157"/>
        <end position="4261"/>
    </location>
</feature>
<feature type="domain" description="Fibronectin type-III 28" evidence="5">
    <location>
        <begin position="4262"/>
        <end position="4357"/>
    </location>
</feature>
<feature type="domain" description="Fibronectin type-III 29" evidence="5">
    <location>
        <begin position="4358"/>
        <end position="4445"/>
    </location>
</feature>
<feature type="domain" description="Fibronectin type-III 30" evidence="5">
    <location>
        <begin position="4446"/>
        <end position="4530"/>
    </location>
</feature>
<feature type="domain" description="Fibronectin type-III 31" evidence="5">
    <location>
        <begin position="4534"/>
        <end position="4630"/>
    </location>
</feature>
<feature type="domain" description="Fibronectin type-III 32" evidence="5">
    <location>
        <begin position="4636"/>
        <end position="4733"/>
    </location>
</feature>
<feature type="domain" description="Fibronectin type-III 33" evidence="5">
    <location>
        <begin position="4734"/>
        <end position="4827"/>
    </location>
</feature>
<feature type="domain" description="Fibronectin type-III 34" evidence="5">
    <location>
        <begin position="4828"/>
        <end position="4927"/>
    </location>
</feature>
<feature type="region of interest" description="Disordered" evidence="8">
    <location>
        <begin position="4518"/>
        <end position="4541"/>
    </location>
</feature>
<feature type="short sequence motif" description="PDZ-binding">
    <location>
        <begin position="5200"/>
        <end position="5202"/>
    </location>
</feature>
<feature type="glycosylation site" description="N-linked (GlcNAc...) asparagine" evidence="3">
    <location>
        <position position="361"/>
    </location>
</feature>
<feature type="glycosylation site" description="N-linked (GlcNAc...) asparagine" evidence="3">
    <location>
        <position position="451"/>
    </location>
</feature>
<feature type="glycosylation site" description="N-linked (GlcNAc...) asparagine" evidence="3">
    <location>
        <position position="587"/>
    </location>
</feature>
<feature type="glycosylation site" description="N-linked (GlcNAc...) asparagine" evidence="3">
    <location>
        <position position="611"/>
    </location>
</feature>
<feature type="glycosylation site" description="N-linked (GlcNAc...) asparagine" evidence="3">
    <location>
        <position position="650"/>
    </location>
</feature>
<feature type="glycosylation site" description="N-linked (GlcNAc...) asparagine" evidence="3">
    <location>
        <position position="697"/>
    </location>
</feature>
<feature type="glycosylation site" description="N-linked (GlcNAc...) asparagine" evidence="3">
    <location>
        <position position="839"/>
    </location>
</feature>
<feature type="glycosylation site" description="N-linked (GlcNAc...) asparagine" evidence="3">
    <location>
        <position position="856"/>
    </location>
</feature>
<feature type="glycosylation site" description="N-linked (GlcNAc...) asparagine" evidence="3">
    <location>
        <position position="862"/>
    </location>
</feature>
<feature type="glycosylation site" description="N-linked (GlcNAc...) asparagine" evidence="3">
    <location>
        <position position="888"/>
    </location>
</feature>
<feature type="glycosylation site" description="N-linked (GlcNAc...) asparagine" evidence="3">
    <location>
        <position position="944"/>
    </location>
</feature>
<feature type="glycosylation site" description="N-linked (GlcNAc...) asparagine" evidence="3">
    <location>
        <position position="1011"/>
    </location>
</feature>
<feature type="glycosylation site" description="N-linked (GlcNAc...) asparagine" evidence="3">
    <location>
        <position position="1071"/>
    </location>
</feature>
<feature type="glycosylation site" description="N-linked (GlcNAc...) asparagine" evidence="3">
    <location>
        <position position="1151"/>
    </location>
</feature>
<feature type="glycosylation site" description="N-linked (GlcNAc...) asparagine" evidence="3">
    <location>
        <position position="1174"/>
    </location>
</feature>
<feature type="glycosylation site" description="N-linked (GlcNAc...) asparagine" evidence="3">
    <location>
        <position position="1379"/>
    </location>
</feature>
<feature type="glycosylation site" description="N-linked (GlcNAc...) asparagine" evidence="3">
    <location>
        <position position="1388"/>
    </location>
</feature>
<feature type="glycosylation site" description="N-linked (GlcNAc...) asparagine" evidence="3">
    <location>
        <position position="1479"/>
    </location>
</feature>
<feature type="glycosylation site" description="N-linked (GlcNAc...) asparagine" evidence="3">
    <location>
        <position position="1635"/>
    </location>
</feature>
<feature type="glycosylation site" description="N-linked (GlcNAc...) asparagine" evidence="3">
    <location>
        <position position="1779"/>
    </location>
</feature>
<feature type="glycosylation site" description="N-linked (GlcNAc...) asparagine" evidence="3">
    <location>
        <position position="1903"/>
    </location>
</feature>
<feature type="glycosylation site" description="N-linked (GlcNAc...) asparagine" evidence="3">
    <location>
        <position position="2011"/>
    </location>
</feature>
<feature type="glycosylation site" description="N-linked (GlcNAc...) asparagine" evidence="3">
    <location>
        <position position="2014"/>
    </location>
</feature>
<feature type="glycosylation site" description="N-linked (GlcNAc...) asparagine" evidence="3">
    <location>
        <position position="2048"/>
    </location>
</feature>
<feature type="glycosylation site" description="N-linked (GlcNAc...) asparagine" evidence="3">
    <location>
        <position position="2130"/>
    </location>
</feature>
<feature type="glycosylation site" description="N-linked (GlcNAc...) asparagine" evidence="3">
    <location>
        <position position="2182"/>
    </location>
</feature>
<feature type="glycosylation site" description="N-linked (GlcNAc...) asparagine" evidence="3">
    <location>
        <position position="2195"/>
    </location>
</feature>
<feature type="glycosylation site" description="N-linked (GlcNAc...) asparagine" evidence="3">
    <location>
        <position position="2258"/>
    </location>
</feature>
<feature type="glycosylation site" description="N-linked (GlcNAc...) asparagine" evidence="3">
    <location>
        <position position="2285"/>
    </location>
</feature>
<feature type="glycosylation site" description="N-linked (GlcNAc...) asparagine" evidence="3">
    <location>
        <position position="2322"/>
    </location>
</feature>
<feature type="glycosylation site" description="N-linked (GlcNAc...) asparagine" evidence="3">
    <location>
        <position position="2377"/>
    </location>
</feature>
<feature type="glycosylation site" description="N-linked (GlcNAc...) asparagine" evidence="3">
    <location>
        <position position="2382"/>
    </location>
</feature>
<feature type="glycosylation site" description="N-linked (GlcNAc...) asparagine" evidence="3">
    <location>
        <position position="2407"/>
    </location>
</feature>
<feature type="glycosylation site" description="N-linked (GlcNAc...) asparagine" evidence="3">
    <location>
        <position position="2413"/>
    </location>
</feature>
<feature type="glycosylation site" description="N-linked (GlcNAc...) asparagine" evidence="3">
    <location>
        <position position="2581"/>
    </location>
</feature>
<feature type="glycosylation site" description="N-linked (GlcNAc...) asparagine" evidence="3">
    <location>
        <position position="2584"/>
    </location>
</feature>
<feature type="glycosylation site" description="N-linked (GlcNAc...) asparagine" evidence="3">
    <location>
        <position position="2656"/>
    </location>
</feature>
<feature type="glycosylation site" description="N-linked (GlcNAc...) asparagine" evidence="3">
    <location>
        <position position="2710"/>
    </location>
</feature>
<feature type="glycosylation site" description="N-linked (GlcNAc...) asparagine" evidence="3">
    <location>
        <position position="2770"/>
    </location>
</feature>
<feature type="glycosylation site" description="N-linked (GlcNAc...) asparagine" evidence="3">
    <location>
        <position position="2788"/>
    </location>
</feature>
<feature type="glycosylation site" description="N-linked (GlcNAc...) asparagine" evidence="3">
    <location>
        <position position="2930"/>
    </location>
</feature>
<feature type="glycosylation site" description="N-linked (GlcNAc...) asparagine" evidence="3">
    <location>
        <position position="2937"/>
    </location>
</feature>
<feature type="glycosylation site" description="N-linked (GlcNAc...) asparagine" evidence="3">
    <location>
        <position position="2970"/>
    </location>
</feature>
<feature type="glycosylation site" description="N-linked (GlcNAc...) asparagine" evidence="3">
    <location>
        <position position="3032"/>
    </location>
</feature>
<feature type="glycosylation site" description="N-linked (GlcNAc...) asparagine" evidence="3">
    <location>
        <position position="3099"/>
    </location>
</feature>
<feature type="glycosylation site" description="N-linked (GlcNAc...) asparagine" evidence="3">
    <location>
        <position position="3217"/>
    </location>
</feature>
<feature type="glycosylation site" description="N-linked (GlcNAc...) asparagine" evidence="3">
    <location>
        <position position="3330"/>
    </location>
</feature>
<feature type="glycosylation site" description="N-linked (GlcNAc...) asparagine" evidence="3">
    <location>
        <position position="3419"/>
    </location>
</feature>
<feature type="glycosylation site" description="N-linked (GlcNAc...) asparagine" evidence="3">
    <location>
        <position position="3433"/>
    </location>
</feature>
<feature type="glycosylation site" description="N-linked (GlcNAc...) asparagine" evidence="3">
    <location>
        <position position="3653"/>
    </location>
</feature>
<feature type="glycosylation site" description="N-linked (GlcNAc...) asparagine" evidence="3">
    <location>
        <position position="3694"/>
    </location>
</feature>
<feature type="glycosylation site" description="N-linked (GlcNAc...) asparagine" evidence="3">
    <location>
        <position position="3733"/>
    </location>
</feature>
<feature type="glycosylation site" description="N-linked (GlcNAc...) asparagine" evidence="3">
    <location>
        <position position="3780"/>
    </location>
</feature>
<feature type="glycosylation site" description="N-linked (GlcNAc...) asparagine" evidence="3">
    <location>
        <position position="3849"/>
    </location>
</feature>
<feature type="glycosylation site" description="N-linked (GlcNAc...) asparagine" evidence="3">
    <location>
        <position position="3984"/>
    </location>
</feature>
<feature type="glycosylation site" description="N-linked (GlcNAc...) asparagine" evidence="3">
    <location>
        <position position="4202"/>
    </location>
</feature>
<feature type="glycosylation site" description="N-linked (GlcNAc...) asparagine" evidence="3">
    <location>
        <position position="4226"/>
    </location>
</feature>
<feature type="glycosylation site" description="N-linked (GlcNAc...) asparagine" evidence="3">
    <location>
        <position position="4317"/>
    </location>
</feature>
<feature type="glycosylation site" description="N-linked (GlcNAc...) asparagine" evidence="3">
    <location>
        <position position="4418"/>
    </location>
</feature>
<feature type="glycosylation site" description="N-linked (GlcNAc...) asparagine" evidence="3">
    <location>
        <position position="4564"/>
    </location>
</feature>
<feature type="glycosylation site" description="N-linked (GlcNAc...) asparagine" evidence="3">
    <location>
        <position position="4583"/>
    </location>
</feature>
<feature type="glycosylation site" description="N-linked (GlcNAc...) asparagine" evidence="3">
    <location>
        <position position="4691"/>
    </location>
</feature>
<feature type="glycosylation site" description="N-linked (GlcNAc...) asparagine" evidence="3">
    <location>
        <position position="4754"/>
    </location>
</feature>
<feature type="glycosylation site" description="N-linked (GlcNAc...) asparagine" evidence="3">
    <location>
        <position position="4800"/>
    </location>
</feature>
<feature type="glycosylation site" description="N-linked (GlcNAc...) asparagine" evidence="3">
    <location>
        <position position="4943"/>
    </location>
</feature>
<feature type="glycosylation site" description="N-linked (GlcNAc...) asparagine" evidence="3">
    <location>
        <position position="4950"/>
    </location>
</feature>
<feature type="disulfide bond" evidence="1">
    <location>
        <begin position="518"/>
        <end position="527"/>
    </location>
</feature>
<feature type="disulfide bond" evidence="1">
    <location>
        <begin position="520"/>
        <end position="536"/>
    </location>
</feature>
<feature type="disulfide bond" evidence="1">
    <location>
        <begin position="538"/>
        <end position="549"/>
    </location>
</feature>
<feature type="disulfide bond" evidence="1">
    <location>
        <begin position="552"/>
        <end position="572"/>
    </location>
</feature>
<feature type="disulfide bond" evidence="1">
    <location>
        <begin position="575"/>
        <end position="584"/>
    </location>
</feature>
<feature type="disulfide bond" evidence="1">
    <location>
        <begin position="577"/>
        <end position="605"/>
    </location>
</feature>
<feature type="disulfide bond" evidence="1">
    <location>
        <begin position="608"/>
        <end position="617"/>
    </location>
</feature>
<feature type="disulfide bond" evidence="1">
    <location>
        <begin position="620"/>
        <end position="638"/>
    </location>
</feature>
<feature type="disulfide bond" evidence="1">
    <location>
        <begin position="641"/>
        <end position="655"/>
    </location>
</feature>
<feature type="disulfide bond" evidence="1">
    <location>
        <begin position="643"/>
        <end position="662"/>
    </location>
</feature>
<feature type="disulfide bond" evidence="1">
    <location>
        <begin position="664"/>
        <end position="673"/>
    </location>
</feature>
<feature type="disulfide bond" evidence="1">
    <location>
        <begin position="676"/>
        <end position="691"/>
    </location>
</feature>
<feature type="disulfide bond" evidence="1">
    <location>
        <begin position="694"/>
        <end position="708"/>
    </location>
</feature>
<feature type="disulfide bond" evidence="1">
    <location>
        <begin position="696"/>
        <end position="715"/>
    </location>
</feature>
<feature type="disulfide bond" evidence="1">
    <location>
        <begin position="717"/>
        <end position="726"/>
    </location>
</feature>
<feature type="disulfide bond" evidence="1">
    <location>
        <begin position="729"/>
        <end position="744"/>
    </location>
</feature>
<feature type="disulfide bond" evidence="1">
    <location>
        <begin position="747"/>
        <end position="759"/>
    </location>
</feature>
<feature type="disulfide bond" evidence="1">
    <location>
        <begin position="749"/>
        <end position="766"/>
    </location>
</feature>
<feature type="disulfide bond" evidence="1">
    <location>
        <begin position="768"/>
        <end position="777"/>
    </location>
</feature>
<feature type="disulfide bond" evidence="1">
    <location>
        <begin position="780"/>
        <end position="792"/>
    </location>
</feature>
<feature type="disulfide bond" evidence="1">
    <location>
        <begin position="795"/>
        <end position="808"/>
    </location>
</feature>
<feature type="disulfide bond" evidence="1">
    <location>
        <begin position="797"/>
        <end position="815"/>
    </location>
</feature>
<feature type="disulfide bond" evidence="1">
    <location>
        <begin position="817"/>
        <end position="826"/>
    </location>
</feature>
<feature type="disulfide bond" evidence="1">
    <location>
        <begin position="829"/>
        <end position="844"/>
    </location>
</feature>
<feature type="disulfide bond" evidence="1">
    <location>
        <begin position="847"/>
        <end position="861"/>
    </location>
</feature>
<feature type="disulfide bond" evidence="1">
    <location>
        <begin position="849"/>
        <end position="868"/>
    </location>
</feature>
<feature type="disulfide bond" evidence="1">
    <location>
        <begin position="870"/>
        <end position="879"/>
    </location>
</feature>
<feature type="disulfide bond" evidence="1">
    <location>
        <begin position="882"/>
        <end position="897"/>
    </location>
</feature>
<feature type="disulfide bond" evidence="1">
    <location>
        <begin position="900"/>
        <end position="913"/>
    </location>
</feature>
<feature type="disulfide bond" evidence="1">
    <location>
        <begin position="902"/>
        <end position="920"/>
    </location>
</feature>
<feature type="disulfide bond" evidence="1">
    <location>
        <begin position="922"/>
        <end position="931"/>
    </location>
</feature>
<feature type="disulfide bond" evidence="1">
    <location>
        <begin position="934"/>
        <end position="948"/>
    </location>
</feature>
<feature type="disulfide bond" evidence="1">
    <location>
        <begin position="951"/>
        <end position="963"/>
    </location>
</feature>
<feature type="disulfide bond" evidence="1">
    <location>
        <begin position="953"/>
        <end position="970"/>
    </location>
</feature>
<feature type="disulfide bond" evidence="1">
    <location>
        <begin position="972"/>
        <end position="982"/>
    </location>
</feature>
<feature type="disulfide bond" evidence="1">
    <location>
        <begin position="985"/>
        <end position="999"/>
    </location>
</feature>
<feature type="disulfide bond" evidence="1">
    <location>
        <begin position="1002"/>
        <end position="1014"/>
    </location>
</feature>
<feature type="disulfide bond" evidence="1">
    <location>
        <begin position="1004"/>
        <end position="1021"/>
    </location>
</feature>
<feature type="disulfide bond" evidence="1">
    <location>
        <begin position="1023"/>
        <end position="1032"/>
    </location>
</feature>
<feature type="disulfide bond" evidence="1">
    <location>
        <begin position="1035"/>
        <end position="1050"/>
    </location>
</feature>
<feature type="disulfide bond" evidence="1">
    <location>
        <begin position="1672"/>
        <end position="1709"/>
    </location>
</feature>
<feature type="disulfide bond" evidence="1">
    <location>
        <begin position="1862"/>
        <end position="1891"/>
    </location>
</feature>
<feature type="disulfide bond" evidence="1">
    <location>
        <begin position="3371"/>
        <end position="3444"/>
    </location>
</feature>
<feature type="disulfide bond" evidence="1">
    <location>
        <begin position="3399"/>
        <end position="3425"/>
    </location>
</feature>
<feature type="splice variant" id="VSP_017771" description="In isoform 2." evidence="52">
    <original>IKA</original>
    <variation>KCV</variation>
    <location>
        <begin position="1544"/>
        <end position="1546"/>
    </location>
</feature>
<feature type="splice variant" id="VSP_017772" description="In isoform 2." evidence="52">
    <location>
        <begin position="1547"/>
        <end position="5202"/>
    </location>
</feature>
<feature type="splice variant" id="VSP_017773" description="In isoform 3." evidence="53">
    <original>M</original>
    <variation>MFDSVADISDVSSNVTLKSYTMHFE</variation>
    <location>
        <position position="5099"/>
    </location>
</feature>
<feature type="sequence variant" id="VAR_071996" description="In USH2A; dbSNP:rs1381795491." evidence="44">
    <original>G</original>
    <variation>R</variation>
    <location>
        <position position="44"/>
    </location>
</feature>
<feature type="sequence variant" id="VAR_025760" description="In dbSNP:rs10779261." evidence="24 25 30 32 42">
    <original>A</original>
    <variation>T</variation>
    <location>
        <position position="125"/>
    </location>
</feature>
<feature type="sequence variant" id="VAR_025761" description="In USH2A." evidence="12 32">
    <original>C</original>
    <variation>Y</variation>
    <location>
        <position position="163"/>
    </location>
</feature>
<feature type="sequence variant" id="VAR_071997" description="In USH2A; dbSNP:rs1171672823." evidence="36">
    <original>S</original>
    <variation>P</variation>
    <location>
        <position position="180"/>
    </location>
</feature>
<feature type="sequence variant" id="VAR_025762" description="In USH2A; dbSNP:rs397518026." evidence="13 31">
    <original>V</original>
    <variation>E</variation>
    <location>
        <position position="218"/>
    </location>
</feature>
<feature type="sequence variant" id="VAR_025763" description="In USH2A; benign; dbSNP:rs45500891." evidence="12 13 24 32">
    <original>V</original>
    <variation>M</variation>
    <location>
        <position position="230"/>
    </location>
</feature>
<feature type="sequence variant" id="VAR_054557" description="In USH2A; uncertain significance; dbSNP:rs111033280." evidence="24 32">
    <original>G</original>
    <variation>R</variation>
    <location>
        <position position="268"/>
    </location>
</feature>
<feature type="sequence variant" id="VAR_054558" description="In USH2A; dbSNP:rs2037760521." evidence="31">
    <original>L</original>
    <variation>F</variation>
    <location>
        <position position="280"/>
    </location>
</feature>
<feature type="sequence variant" id="VAR_054559" description="In USH2A." evidence="31">
    <original>E</original>
    <variation>K</variation>
    <location>
        <position position="284"/>
    </location>
</feature>
<feature type="sequence variant" id="VAR_054560" description="In USH2A; dbSNP:rs748465849." evidence="32">
    <original>R</original>
    <variation>C</variation>
    <location>
        <position position="303"/>
    </location>
</feature>
<feature type="sequence variant" id="VAR_054561" description="In USH2A; dbSNP:rs748465849." evidence="20">
    <original>R</original>
    <variation>S</variation>
    <location>
        <position position="303"/>
    </location>
</feature>
<feature type="sequence variant" id="VAR_054562" description="In USH2A; uncertain significance; dbSNP:rs1553250805." evidence="24">
    <original>S</original>
    <variation>I</variation>
    <location>
        <position position="307"/>
    </location>
</feature>
<feature type="sequence variant" id="VAR_025764" description="In USH2A; dbSNP:rs121912599." evidence="9">
    <original>C</original>
    <variation>Y</variation>
    <location>
        <position position="319"/>
    </location>
</feature>
<feature type="sequence variant" id="VAR_054563" description="In USH2A; dbSNP:rs758303489." evidence="31">
    <original>R</original>
    <variation>Q</variation>
    <location>
        <position position="334"/>
    </location>
</feature>
<feature type="sequence variant" id="VAR_025765" description="In USH2A; dbSNP:rs397517963." evidence="10 22 31 32 33 35">
    <original>R</original>
    <variation>W</variation>
    <location>
        <position position="334"/>
    </location>
</feature>
<feature type="sequence variant" id="VAR_025766" description="In USH2A; dbSNP:rs369522997." evidence="9 22 23 31 32">
    <original>N</original>
    <variation>H</variation>
    <location>
        <position position="346"/>
    </location>
</feature>
<feature type="sequence variant" id="VAR_054564" description="In USH2A; dbSNP:rs780308389." evidence="31 32">
    <original>T</original>
    <variation>I</variation>
    <location>
        <position position="352"/>
    </location>
</feature>
<feature type="sequence variant" id="VAR_054565" description="In USH2A." evidence="22">
    <original>N</original>
    <variation>T</variation>
    <location>
        <position position="357"/>
    </location>
</feature>
<feature type="sequence variant" id="VAR_054566" description="In dbSNP:rs531691537." evidence="24">
    <original>L</original>
    <variation>F</variation>
    <location>
        <position position="365"/>
    </location>
</feature>
<feature type="sequence variant" id="VAR_071998" description="In USH2A; dbSNP:rs750651679." evidence="44">
    <original>V</original>
    <variation>M</variation>
    <location>
        <position position="382"/>
    </location>
</feature>
<feature type="sequence variant" id="VAR_054567" description="In USH2A; uncertain significance; dbSNP:rs949082769." evidence="24">
    <original>S</original>
    <variation>I</variation>
    <location>
        <position position="391"/>
    </location>
</feature>
<feature type="sequence variant" id="VAR_025767" description="In USH2A and RP39; dbSNP:rs121912600." evidence="9 23 24 45">
    <original>C</original>
    <variation>F</variation>
    <location>
        <position position="419"/>
    </location>
</feature>
<feature type="sequence variant" id="VAR_064761" description="Found in a renal cell carcinoma sample; somatic mutation; dbSNP:rs2102653345." evidence="40">
    <original>T</original>
    <variation>I</variation>
    <location>
        <position position="453"/>
    </location>
</feature>
<feature type="sequence variant" id="VAR_054568" description="In USH2A; uncertain significance; dbSNP:rs1423536179." evidence="24">
    <original>R</original>
    <variation>C</variation>
    <location>
        <position position="464"/>
    </location>
</feature>
<feature type="sequence variant" id="VAR_025768" description="In RP39 and USH2A; benign; dbSNP:rs35730265." evidence="10 24 25 30 32">
    <original>E</original>
    <variation>D</variation>
    <location>
        <position position="478"/>
    </location>
</feature>
<feature type="sequence variant" id="VAR_054569" evidence="22 51">
    <original>F</original>
    <variation>S</variation>
    <location>
        <position position="479"/>
    </location>
</feature>
<feature type="sequence variant" id="VAR_054570" description="In USH2A; uncertain significance; dbSNP:rs1415484067." evidence="24">
    <original>G</original>
    <variation>V</variation>
    <location>
        <position position="516"/>
    </location>
</feature>
<feature type="sequence variant" id="VAR_054571" description="In USH2A; uncertain significance; dbSNP:rs1393503590." evidence="24">
    <original>R</original>
    <variation>T</variation>
    <location>
        <position position="517"/>
    </location>
</feature>
<feature type="sequence variant" id="VAR_025769" description="In USH2A; abolishes interaction with collagen IV; dbSNP:rs111033273." evidence="12 23 32">
    <original>C</original>
    <variation>R</variation>
    <location>
        <position position="536"/>
    </location>
</feature>
<feature type="sequence variant" id="VAR_025770" description="In USH2A; dbSNP:rs35818432." evidence="13 35">
    <original>L</original>
    <variation>V</variation>
    <location>
        <position position="555"/>
    </location>
</feature>
<feature type="sequence variant" id="VAR_054572" description="In USH2A; uncertain significance." evidence="24">
    <original>C</original>
    <variation>S</variation>
    <location>
        <position position="575"/>
    </location>
</feature>
<feature type="sequence variant" id="VAR_054573" description="In USH2A; uncertain significance." evidence="24">
    <location>
        <position position="587"/>
    </location>
</feature>
<feature type="sequence variant" id="VAR_054574" description="In dbSNP:rs200496467." evidence="32">
    <original>F</original>
    <variation>S</variation>
    <location>
        <position position="595"/>
    </location>
</feature>
<feature type="sequence variant" id="VAR_025771" description="In USH2A; dbSNP:rs1571668556." evidence="18">
    <original>H</original>
    <variation>P</variation>
    <location>
        <position position="610"/>
    </location>
</feature>
<feature type="sequence variant" id="VAR_025772" description="In dbSNP:rs1805048." evidence="10 22 24 25 30 32">
    <original>D</original>
    <variation>V</variation>
    <location>
        <position position="644"/>
    </location>
</feature>
<feature type="sequence variant" id="VAR_071999" description="In USH2A." evidence="36">
    <original>C</original>
    <variation>Y</variation>
    <location>
        <position position="691"/>
    </location>
</feature>
<feature type="sequence variant" id="VAR_025773" description="In dbSNP:rs45555435." evidence="25">
    <original>D</original>
    <variation>E</variation>
    <location>
        <position position="703"/>
    </location>
</feature>
<feature type="sequence variant" id="VAR_025774" description="Abolishes interaction with collagen IV; dbSNP:rs696723." evidence="12 15 23 24 29 30 32">
    <original>G</original>
    <variation>R</variation>
    <location>
        <position position="713"/>
    </location>
</feature>
<feature type="sequence variant" id="VAR_054575" description="In RP39; uncertain significance; dbSNP:rs1212098704." evidence="24">
    <original>F</original>
    <variation>L</variation>
    <location>
        <position position="739"/>
    </location>
</feature>
<feature type="sequence variant" id="VAR_025775" description="In RP39 and USH2A; associated in cis with C-4115 and M-4425 in some USH2A patients; dbSNP:rs80338902." evidence="11 15 16 20 24 25 31 32 45">
    <original>C</original>
    <variation>F</variation>
    <location>
        <position position="759"/>
    </location>
</feature>
<feature type="sequence variant" id="VAR_025776" description="In USH2A." evidence="18">
    <original>P</original>
    <variation>R</variation>
    <location>
        <position position="761"/>
    </location>
</feature>
<feature type="sequence variant" id="VAR_025777" description="In dbSNP:rs111033282." evidence="25">
    <original>S</original>
    <variation>Y</variation>
    <location>
        <position position="841"/>
    </location>
</feature>
<feature type="sequence variant" id="VAR_054576" description="In RP39; uncertain significance; dbSNP:rs397518006." evidence="24">
    <original>T</original>
    <variation>N</variation>
    <location>
        <position position="911"/>
    </location>
</feature>
<feature type="sequence variant" id="VAR_072000" description="In RP39; dbSNP:rs201527662." evidence="42">
    <original>C</original>
    <variation>W</variation>
    <location>
        <position position="934"/>
    </location>
</feature>
<feature type="sequence variant" id="VAR_054577" description="In dbSNP:rs727503735." evidence="24">
    <original>L</original>
    <variation>V</variation>
    <location>
        <position position="1047"/>
    </location>
</feature>
<feature type="sequence variant" id="VAR_054578" description="In USH2A; uncertain significance; dbSNP:rs547581739." evidence="24">
    <original>P</original>
    <variation>L</variation>
    <location>
        <position position="1059"/>
    </location>
</feature>
<feature type="sequence variant" id="VAR_054579" description="In USH2A." evidence="32">
    <original>P</original>
    <variation>L</variation>
    <location>
        <position position="1212"/>
    </location>
</feature>
<feature type="sequence variant" id="VAR_054580" description="In dbSNP:rs761656866." evidence="32">
    <original>S</original>
    <variation>P</variation>
    <location>
        <position position="1349"/>
    </location>
</feature>
<feature type="sequence variant" id="VAR_072001" description="In USH2A." evidence="36">
    <location>
        <position position="1369"/>
    </location>
</feature>
<feature type="sequence variant" id="VAR_072002" description="In RP39; dbSNP:rs766108245." evidence="47">
    <original>F</original>
    <variation>S</variation>
    <location>
        <position position="1442"/>
    </location>
</feature>
<feature type="sequence variant" id="VAR_054581" description="In RP39; uncertain significance." evidence="24">
    <original>L</original>
    <variation>R</variation>
    <location>
        <position position="1470"/>
    </location>
</feature>
<feature type="sequence variant" id="VAR_025778" description="In dbSNP:rs1805049." evidence="9 10 24 25 30 32 36 42 51">
    <original>R</original>
    <variation>K</variation>
    <location>
        <position position="1486"/>
    </location>
</feature>
<feature type="sequence variant" id="VAR_025779" description="In USH2A; dbSNP:rs373599651." evidence="10">
    <original>T</original>
    <variation>M</variation>
    <location>
        <position position="1515"/>
    </location>
</feature>
<feature type="sequence variant" id="VAR_054582" description="In dbSNP:rs111033333." evidence="29 31 32 39">
    <original>L</original>
    <variation>F</variation>
    <location>
        <position position="1572"/>
    </location>
</feature>
<feature type="sequence variant" id="VAR_038362" description="In dbSNP:rs56222536." evidence="29 30 32 39">
    <original>I</original>
    <variation>T</variation>
    <location>
        <position position="1665"/>
    </location>
</feature>
<feature type="sequence variant" id="VAR_079877" description="Found in a patient with non-syndromic sensorineural hearing loss; uncertain significance; dbSNP:rs771088957." evidence="48">
    <original>P</original>
    <variation>L</variation>
    <location>
        <position position="1684"/>
    </location>
</feature>
<feature type="sequence variant" id="VAR_072003" description="In USH2A." evidence="37">
    <original>G</original>
    <variation>R</variation>
    <location>
        <position position="1734"/>
    </location>
</feature>
<feature type="sequence variant" id="VAR_054583" evidence="32">
    <original>Y</original>
    <variation>C</variation>
    <location>
        <position position="1757"/>
    </location>
</feature>
<feature type="sequence variant" id="VAR_072004" description="In USH2A; dbSNP:rs770329105." evidence="41">
    <original>R</original>
    <variation>W</variation>
    <location>
        <position position="1777"/>
    </location>
</feature>
<feature type="sequence variant" id="VAR_054584" description="In USH2A; dbSNP:rs2102554268." evidence="31">
    <original>V</original>
    <variation>E</variation>
    <location>
        <position position="1833"/>
    </location>
</feature>
<feature type="sequence variant" id="VAR_072005" description="In USH2A; uncertain significance; dbSNP:rs755032078." evidence="39">
    <original>P</original>
    <variation>T</variation>
    <location>
        <position position="1836"/>
    </location>
</feature>
<feature type="sequence variant" id="VAR_072006" description="In USH2A; dbSNP:rs1571941511." evidence="33">
    <original>G</original>
    <variation>V</variation>
    <location>
        <position position="1840"/>
    </location>
</feature>
<feature type="sequence variant" id="VAR_072007" description="In USH2A; dbSNP:rs200209833." evidence="46">
    <original>P</original>
    <variation>L</variation>
    <location>
        <position position="1843"/>
    </location>
</feature>
<feature type="sequence variant" id="VAR_068354" description="In RP39." evidence="45">
    <original>F</original>
    <variation>C</variation>
    <location>
        <position position="1859"/>
    </location>
</feature>
<feature type="sequence variant" id="VAR_072008" description="In USH2A; dbSNP:rs375668376." evidence="46">
    <original>G</original>
    <variation>S</variation>
    <location>
        <position position="1861"/>
    </location>
</feature>
<feature type="sequence variant" id="VAR_072009" description="In USH2A; uncertain significance; dbSNP:rs41302239." evidence="39">
    <original>A</original>
    <variation>G</variation>
    <location>
        <position position="1953"/>
    </location>
</feature>
<feature type="sequence variant" id="VAR_072010" description="In RP39; uncertain significance; dbSNP:rs75698489." evidence="39">
    <original>P</original>
    <variation>S</variation>
    <location>
        <position position="1978"/>
    </location>
</feature>
<feature type="sequence variant" id="VAR_054585" description="In USH2A; uncertain significance; dbSNP:rs114402911." evidence="32 39">
    <original>K</original>
    <variation>N</variation>
    <location>
        <position position="2080"/>
    </location>
</feature>
<feature type="sequence variant" id="VAR_054586" description="In dbSNP:rs149202379." evidence="32">
    <original>T</original>
    <variation>N</variation>
    <location>
        <position position="2086"/>
    </location>
</feature>
<feature type="sequence variant" id="VAR_038363" description="In dbSNP:rs6657250." evidence="29 30 32 36 42">
    <original>I</original>
    <variation>T</variation>
    <location>
        <position position="2106"/>
    </location>
</feature>
<feature type="sequence variant" id="VAR_072011" description="In USH2A; uncertain significance; dbSNP:rs111033450." evidence="39">
    <original>H</original>
    <variation>R</variation>
    <location>
        <position position="2116"/>
    </location>
</feature>
<feature type="sequence variant" id="VAR_072012" description="In USH2A; uncertain significance." evidence="39">
    <original>C</original>
    <variation>F</variation>
    <location>
        <position position="2128"/>
    </location>
</feature>
<feature type="sequence variant" id="VAR_072013" description="In USH2A; uncertain significance." evidence="39">
    <original>C</original>
    <variation>Y</variation>
    <location>
        <position position="2128"/>
    </location>
</feature>
<feature type="sequence variant" id="VAR_038364" description="In dbSNP:rs10864219." evidence="29 30 32 36 39 42">
    <original>I</original>
    <variation>T</variation>
    <location>
        <position position="2169"/>
    </location>
</feature>
<feature type="sequence variant" id="VAR_072014" description="In USH2A; benign; dbSNP:rs79444516." evidence="39">
    <original>S</original>
    <variation>T</variation>
    <location>
        <position position="2196"/>
    </location>
</feature>
<feature type="sequence variant" id="VAR_072015" description="In RP39; uncertain significance; dbSNP:rs1177455978." evidence="39">
    <original>D</original>
    <variation>Y</variation>
    <location>
        <position position="2237"/>
    </location>
</feature>
<feature type="sequence variant" id="VAR_054587" description="In USH2A; benign; dbSNP:rs41277212." evidence="29 32 39">
    <original>E</original>
    <variation>A</variation>
    <location>
        <position position="2238"/>
    </location>
</feature>
<feature type="sequence variant" id="VAR_054588" description="In USH2A." evidence="29">
    <original>A</original>
    <variation>D</variation>
    <location>
        <position position="2249"/>
    </location>
</feature>
<feature type="sequence variant" id="VAR_072016" description="In USH2A; uncertain significance; dbSNP:rs1668038063." evidence="39">
    <original>S</original>
    <variation>P</variation>
    <location>
        <position position="2260"/>
    </location>
</feature>
<feature type="sequence variant" id="VAR_054589" description="In USH2A." evidence="32">
    <original>EY</original>
    <variation>D</variation>
    <location>
        <begin position="2265"/>
        <end position="2266"/>
    </location>
</feature>
<feature type="sequence variant" id="VAR_054590" description="In USH2A; benign; dbSNP:rs41277210." evidence="32 39">
    <original>R</original>
    <variation>H</variation>
    <location>
        <position position="2292"/>
    </location>
</feature>
<feature type="sequence variant" id="VAR_054591" description="In USH2A; dbSNP:rs201386640." evidence="29">
    <original>R</original>
    <variation>H</variation>
    <location>
        <position position="2354"/>
    </location>
</feature>
<feature type="sequence variant" id="VAR_072017" description="In dbSNP:rs111033394." evidence="44">
    <original>N</original>
    <variation>S</variation>
    <location>
        <position position="2377"/>
    </location>
</feature>
<feature type="sequence variant" id="VAR_072018" evidence="44">
    <original>N</original>
    <variation>K</variation>
    <location>
        <position position="2394"/>
    </location>
</feature>
<feature type="sequence variant" id="VAR_068355" description="In RP39; dbSNP:rs368681648." evidence="45">
    <original>R</original>
    <variation>H</variation>
    <location>
        <position position="2460"/>
    </location>
</feature>
<feature type="sequence variant" id="VAR_054592" description="In USH2A; benign; dbSNP:rs56385601." evidence="32 39">
    <original>V</original>
    <variation>A</variation>
    <location>
        <position position="2562"/>
    </location>
</feature>
<feature type="sequence variant" id="VAR_072019" description="In RP39; uncertain significance; dbSNP:rs189748047." evidence="39">
    <original>R</original>
    <variation>H</variation>
    <location>
        <position position="2573"/>
    </location>
</feature>
<feature type="sequence variant" id="VAR_072020" description="In USH2A; uncertain significance; dbSNP:rs398124620." evidence="39">
    <original>S</original>
    <variation>P</variation>
    <location>
        <position position="2639"/>
    </location>
</feature>
<feature type="sequence variant" id="VAR_072021" description="In USH2A; dbSNP:rs750687826." evidence="46">
    <original>D</original>
    <variation>N</variation>
    <location>
        <position position="2738"/>
    </location>
</feature>
<feature type="sequence variant" id="VAR_072022" description="In USH2A; dbSNP:rs1424639717." evidence="42">
    <original>W</original>
    <variation>C</variation>
    <location>
        <position position="2744"/>
    </location>
</feature>
<feature type="sequence variant" id="VAR_072023" description="In USH2A; dbSNP:rs201863550." evidence="36">
    <original>G</original>
    <variation>R</variation>
    <location>
        <position position="2752"/>
    </location>
</feature>
<feature type="sequence variant" id="VAR_072024" description="In USH2A; uncertain significance; dbSNP:rs111033262." evidence="39">
    <original>F</original>
    <variation>S</variation>
    <location>
        <position position="2786"/>
    </location>
</feature>
<feature type="sequence variant" id="VAR_054593" description="In USH2A." evidence="31">
    <original>A</original>
    <variation>S</variation>
    <location>
        <position position="2795"/>
    </location>
</feature>
<feature type="sequence variant" id="VAR_079508" description="Found in a family with autosomal recessive deafness; uncertain significance; dbSNP:rs111033529." evidence="50">
    <original>P</original>
    <variation>T</variation>
    <location>
        <position position="2811"/>
    </location>
</feature>
<feature type="sequence variant" id="VAR_061350" description="In dbSNP:rs59174500.">
    <original>V</original>
    <variation>I</variation>
    <location>
        <position position="2820"/>
    </location>
</feature>
<feature type="sequence variant" id="VAR_038365" description="In dbSNP:rs12118814." evidence="29 30 32 36 39">
    <original>R</original>
    <variation>Q</variation>
    <location>
        <position position="2875"/>
    </location>
</feature>
<feature type="sequence variant" id="VAR_054594" description="In dbSNP:rs41277200." evidence="29 32 36">
    <original>L</original>
    <variation>F</variation>
    <location>
        <position position="2886"/>
    </location>
</feature>
<feature type="sequence variant" id="VAR_072025" description="In RP39; uncertain significance; dbSNP:rs754774098." evidence="39">
    <original>N</original>
    <variation>K</variation>
    <location>
        <position position="2930"/>
    </location>
</feature>
<feature type="sequence variant" id="VAR_054595" description="In dbSNP:rs56056328." evidence="32">
    <original>E</original>
    <variation>K</variation>
    <location>
        <position position="3088"/>
    </location>
</feature>
<feature type="sequence variant" id="VAR_038366" description="In dbSNP:rs41277194." evidence="29 30 32 39">
    <original>N</original>
    <variation>S</variation>
    <location>
        <position position="3099"/>
    </location>
</feature>
<feature type="sequence variant" id="VAR_054596" description="In dbSNP:rs56032526." evidence="32 36">
    <original>T</original>
    <variation>A</variation>
    <location>
        <position position="3115"/>
    </location>
</feature>
<feature type="sequence variant" id="VAR_054597" description="In USH2A; uncertain significance; dbSNP:rs1453306308." evidence="32">
    <original>R</original>
    <variation>G</variation>
    <location>
        <position position="3124"/>
    </location>
</feature>
<feature type="sequence variant" id="VAR_038367" description="In dbSNP:rs11120645." evidence="29 30 32 39">
    <original>D</original>
    <variation>N</variation>
    <location>
        <position position="3144"/>
    </location>
</feature>
<feature type="sequence variant" id="VAR_034064" description="In dbSNP:rs4129843." evidence="32 36">
    <original>N</original>
    <variation>D</variation>
    <location>
        <position position="3199"/>
    </location>
</feature>
<feature type="sequence variant" id="VAR_054598" description="In USH2A; dbSNP:rs527236118." evidence="29">
    <original>C</original>
    <variation>R</variation>
    <location>
        <position position="3251"/>
    </location>
</feature>
<feature type="sequence variant" id="VAR_072026" description="In USH2A; uncertain significance." evidence="39">
    <location>
        <begin position="3263"/>
        <end position="3269"/>
    </location>
</feature>
<feature type="sequence variant" id="VAR_054599" description="In USH2A; dbSNP:rs111033263." evidence="29">
    <original>C</original>
    <variation>R</variation>
    <location>
        <position position="3267"/>
    </location>
</feature>
<feature type="sequence variant" id="VAR_054600" description="In USH2A." evidence="31">
    <original>C</original>
    <variation>R</variation>
    <location>
        <position position="3282"/>
    </location>
</feature>
<feature type="sequence variant" id="VAR_038368" evidence="30">
    <original>I</original>
    <variation>M</variation>
    <location>
        <position position="3335"/>
    </location>
</feature>
<feature type="sequence variant" id="VAR_068356" description="In RP39; dbSNP:rs148660051." evidence="39 45">
    <original>C</original>
    <variation>Y</variation>
    <location>
        <position position="3358"/>
    </location>
</feature>
<feature type="sequence variant" id="VAR_072027" description="In RP39; uncertain significance; dbSNP:rs553202000." evidence="39">
    <original>S</original>
    <variation>Y</variation>
    <location>
        <position position="3384"/>
    </location>
</feature>
<feature type="sequence variant" id="VAR_050087" description="In dbSNP:rs10864198." evidence="29 32 36 39 42">
    <original>E</original>
    <variation>A</variation>
    <location>
        <position position="3411"/>
    </location>
</feature>
<feature type="sequence variant" id="VAR_072028" description="In USH2A; uncertain significance; dbSNP:rs368049814." evidence="39">
    <original>E</original>
    <variation>K</variation>
    <location>
        <position position="3448"/>
    </location>
</feature>
<feature type="sequence variant" id="VAR_072029" description="In USH2A; uncertain significance; dbSNP:rs1416602859." evidence="39">
    <original>T</original>
    <variation>I</variation>
    <location>
        <position position="3462"/>
    </location>
</feature>
<feature type="sequence variant" id="VAR_054601" description="In USH2A." evidence="29">
    <original>Y</original>
    <variation>YY</variation>
    <location>
        <position position="3472"/>
    </location>
</feature>
<feature type="sequence variant" id="VAR_072030" description="In USH2A; uncertain significance; dbSNP:rs1308924086." evidence="39">
    <original>W</original>
    <variation>C</variation>
    <location>
        <position position="3479"/>
    </location>
</feature>
<feature type="sequence variant" id="VAR_079509" description="Found in a family with autosomal recessive deafness; uncertain significance; dbSNP:rs200372118." evidence="50">
    <original>P</original>
    <variation>A</variation>
    <location>
        <position position="3504"/>
    </location>
</feature>
<feature type="sequence variant" id="VAR_054602" description="In USH2A; dbSNP:rs200372118." evidence="32">
    <original>P</original>
    <variation>T</variation>
    <location>
        <position position="3504"/>
    </location>
</feature>
<feature type="sequence variant" id="VAR_072031" description="In USH2A; dbSNP:rs527236119." evidence="36">
    <original>D</original>
    <variation>G</variation>
    <location>
        <position position="3515"/>
    </location>
</feature>
<feature type="sequence variant" id="VAR_054603" description="In USH2A; dbSNP:rs111033264." evidence="32">
    <original>W</original>
    <variation>R</variation>
    <location>
        <position position="3521"/>
    </location>
</feature>
<feature type="sequence variant" id="VAR_072032" description="In USH2A; uncertain significance; dbSNP:rs111033439." evidence="39">
    <original>G</original>
    <variation>S</variation>
    <location>
        <position position="3529"/>
    </location>
</feature>
<feature type="sequence variant" id="VAR_072033" description="In USH2A; dbSNP:rs1553261372." evidence="44">
    <original>G</original>
    <variation>R</variation>
    <location>
        <position position="3546"/>
    </location>
</feature>
<feature type="sequence variant" id="VAR_054604" description="In USH2A; dbSNP:rs202175091." evidence="29 31 36">
    <original>T</original>
    <variation>M</variation>
    <location>
        <position position="3571"/>
    </location>
</feature>
<feature type="sequence variant" id="VAR_054605" description="In dbSNP:rs115403785." evidence="32">
    <original>P</original>
    <variation>L</variation>
    <location>
        <position position="3590"/>
    </location>
</feature>
<feature type="sequence variant" id="VAR_072034" description="In RP39; uncertain significance; dbSNP:rs1402464909." evidence="39">
    <original>L</original>
    <variation>P</variation>
    <location>
        <position position="3606"/>
    </location>
</feature>
<feature type="sequence variant" id="VAR_072035" description="In RP39; uncertain significance; dbSNP:rs778158900." evidence="39">
    <original>G</original>
    <variation>S</variation>
    <location>
        <position position="3618"/>
    </location>
</feature>
<feature type="sequence variant" id="VAR_068357" description="In RP39." evidence="45">
    <original>S</original>
    <variation>R</variation>
    <location>
        <position position="3669"/>
    </location>
</feature>
<feature type="sequence variant" id="VAR_072036" description="In RP39; uncertain significance; dbSNP:rs527236139." evidence="39">
    <original>R</original>
    <variation>H</variation>
    <location>
        <position position="3719"/>
    </location>
</feature>
<feature type="sequence variant" id="VAR_072037" description="In USH2A." evidence="36">
    <original>Y</original>
    <variation>C</variation>
    <location>
        <position position="3747"/>
    </location>
</feature>
<feature type="sequence variant" id="VAR_050088" description="In dbSNP:rs11120616." evidence="32 36 44">
    <original>T</original>
    <variation>I</variation>
    <location>
        <position position="3835"/>
    </location>
</feature>
<feature type="sequence variant" id="VAR_072038" description="In USH2A; uncertain significance; dbSNP:rs765306173." evidence="39">
    <original>I</original>
    <variation>M</variation>
    <location>
        <position position="3844"/>
    </location>
</feature>
<feature type="sequence variant" id="VAR_054606" description="In dbSNP:rs35309576." evidence="29 32 36 39">
    <original>M</original>
    <variation>V</variation>
    <location>
        <position position="3868"/>
    </location>
</feature>
<feature type="sequence variant" id="VAR_054607" description="In dbSNP:rs41303285." evidence="32">
    <original>P</original>
    <variation>T</variation>
    <location>
        <position position="3893"/>
    </location>
</feature>
<feature type="sequence variant" id="VAR_072039" description="In USH2A." evidence="44">
    <original>N</original>
    <variation>D</variation>
    <location>
        <position position="3894"/>
    </location>
</feature>
<feature type="sequence variant" id="VAR_054608" description="In USH2A; dbSNP:rs1472714005." evidence="31">
    <original>G</original>
    <variation>E</variation>
    <location>
        <position position="3895"/>
    </location>
</feature>
<feature type="sequence variant" id="VAR_072040" description="In USH2A; uncertain significance; dbSNP:rs182741276." evidence="39">
    <original>R</original>
    <variation>K</variation>
    <location>
        <position position="3904"/>
    </location>
</feature>
<feature type="sequence variant" id="VAR_054609" description="In USH2A; dbSNP:rs142381713." evidence="31">
    <original>T</original>
    <variation>M</variation>
    <location>
        <position position="3976"/>
    </location>
</feature>
<feature type="sequence variant" id="VAR_054610" description="In USH2A; dbSNP:rs1571953381." evidence="32">
    <original>S</original>
    <variation>I</variation>
    <location>
        <position position="4054"/>
    </location>
</feature>
<feature type="sequence variant" id="VAR_072041" description="In RP39; uncertain significance." evidence="39">
    <original>N</original>
    <variation>K</variation>
    <location>
        <position position="4094"/>
    </location>
</feature>
<feature type="sequence variant" id="VAR_025780" description="In RP39 and USH2A; associated in cis with F-759 and M-4425 in USH2A; dbSNP:rs111033275." evidence="21 31 32 45">
    <original>R</original>
    <variation>C</variation>
    <location>
        <position position="4115"/>
    </location>
</feature>
<feature type="sequence variant" id="VAR_072042" description="In USH2A; uncertain significance; dbSNP:rs754560357." evidence="39">
    <original>S</original>
    <variation>R</variation>
    <location>
        <position position="4174"/>
    </location>
</feature>
<feature type="sequence variant" id="VAR_068358" description="In RP39; uncertain significance; dbSNP:rs199605265." evidence="39 45">
    <original>R</original>
    <variation>H</variation>
    <location>
        <position position="4192"/>
    </location>
</feature>
<feature type="sequence variant" id="VAR_066665" description="In dbSNP:rs148556640." evidence="36 43">
    <original>Q</original>
    <variation>R</variation>
    <location>
        <position position="4203"/>
    </location>
</feature>
<feature type="sequence variant" id="VAR_054611" description="In USH2A; dbSNP:rs745371873." evidence="32">
    <original>P</original>
    <variation>R</variation>
    <location>
        <position position="4232"/>
    </location>
</feature>
<feature type="sequence variant" id="VAR_072043" description="In RP39; uncertain significance; dbSNP:rs372137776." evidence="39">
    <original>H</original>
    <variation>N</variation>
    <location>
        <position position="4248"/>
    </location>
</feature>
<feature type="sequence variant" id="VAR_072044" description="In USH2A; uncertain significance; dbSNP:rs1553252475." evidence="39">
    <original>P</original>
    <variation>R</variation>
    <location>
        <position position="4269"/>
    </location>
</feature>
<feature type="sequence variant" id="VAR_054612" description="In USH2A; dbSNP:rs527236137." evidence="29">
    <original>T</original>
    <variation>M</variation>
    <location>
        <position position="4337"/>
    </location>
</feature>
<feature type="sequence variant" id="VAR_075587" description="In USH2A; uncertain significance." evidence="49">
    <original>I</original>
    <variation>F</variation>
    <location>
        <position position="4386"/>
    </location>
</feature>
<feature type="sequence variant" id="VAR_025781" description="In USH2A and RP39; associated in cis with F-759 and C-4115 in USH2A; dbSNP:rs201238640." evidence="21 31 45">
    <original>T</original>
    <variation>M</variation>
    <location>
        <position position="4425"/>
    </location>
</feature>
<feature type="sequence variant" id="VAR_054613" description="In USH2A; benign; dbSNP:rs111033381." evidence="32 39">
    <original>V</original>
    <variation>L</variation>
    <location>
        <position position="4433"/>
    </location>
</feature>
<feature type="sequence variant" id="VAR_054614" description="In USH2A; dbSNP:rs753330544." evidence="32 38">
    <original>T</original>
    <variation>I</variation>
    <location>
        <position position="4439"/>
    </location>
</feature>
<feature type="sequence variant" id="VAR_072045" description="In USH2A; uncertain significance." evidence="39">
    <original>ENMDS</original>
    <variation>DL</variation>
    <location>
        <begin position="4445"/>
        <end position="4449"/>
    </location>
</feature>
<feature type="sequence variant" id="VAR_072046" description="In RP39; uncertain significance; dbSNP:rs139474806." evidence="39">
    <original>M</original>
    <variation>V</variation>
    <location>
        <position position="4447"/>
    </location>
</feature>
<feature type="sequence variant" id="VAR_054615" description="In USH2A; dbSNP:rs768893227." evidence="32">
    <original>Y</original>
    <variation>C</variation>
    <location>
        <position position="4487"/>
    </location>
</feature>
<feature type="sequence variant" id="VAR_072047" description="In dbSNP:rs138879998." evidence="36">
    <original>R</original>
    <variation>H</variation>
    <location>
        <position position="4493"/>
    </location>
</feature>
<feature type="sequence variant" id="VAR_072048" description="In USH2A; uncertain significance; dbSNP:rs730254." evidence="39">
    <original>R</original>
    <variation>H</variation>
    <location>
        <position position="4570"/>
    </location>
</feature>
<feature type="sequence variant" id="VAR_054616" description="In USH2A; dbSNP:rs1350039852." evidence="32">
    <original>Q</original>
    <variation>H</variation>
    <location>
        <position position="4592"/>
    </location>
</feature>
<feature type="sequence variant" id="VAR_072049" description="In dbSNP:rs376077079." evidence="36">
    <original>A</original>
    <variation>V</variation>
    <location>
        <position position="4611"/>
    </location>
</feature>
<feature type="sequence variant" id="VAR_072050" description="In dbSNP:rs527236124." evidence="41">
    <original>G</original>
    <variation>V</variation>
    <location>
        <position position="4616"/>
    </location>
</feature>
<feature type="sequence variant" id="VAR_054617" description="In dbSNP:rs1369860869." evidence="32">
    <original>F</original>
    <variation>V</variation>
    <location>
        <position position="4624"/>
    </location>
</feature>
<feature type="sequence variant" id="VAR_072051" description="In USH2A; uncertain significance; dbSNP:rs41302237." evidence="39">
    <original>Q</original>
    <variation>E</variation>
    <location>
        <position position="4662"/>
    </location>
</feature>
<feature type="sequence variant" id="VAR_038369" description="In RP39; dbSNP:rs80338904." evidence="30">
    <original>R</original>
    <variation>G</variation>
    <location>
        <position position="4674"/>
    </location>
</feature>
<feature type="sequence variant" id="VAR_061351" description="In USH2A; likely benign; dbSNP:rs45549044." evidence="39">
    <original>G</original>
    <variation>R</variation>
    <location>
        <position position="4692"/>
    </location>
</feature>
<feature type="sequence variant" id="VAR_050089" description="In dbSNP:rs12085354.">
    <original>R</original>
    <variation>K</variation>
    <location>
        <position position="4739"/>
    </location>
</feature>
<feature type="sequence variant" id="VAR_072052" description="In USH2A; uncertain significance; dbSNP:rs397517990." evidence="39">
    <original>G</original>
    <variation>R</variation>
    <location>
        <position position="4763"/>
    </location>
</feature>
<feature type="sequence variant" id="VAR_072053" description="In dbSNP:rs113447586." evidence="39">
    <original>A</original>
    <variation>D</variation>
    <location>
        <position position="4778"/>
    </location>
</feature>
<feature type="sequence variant" id="VAR_054618" description="In USH2A; dbSNP:rs199851839." evidence="32">
    <original>L</original>
    <variation>R</variation>
    <location>
        <position position="4795"/>
    </location>
</feature>
<feature type="sequence variant" id="VAR_072054" description="In USH2A; uncertain significance." evidence="39">
    <original>C</original>
    <variation>R</variation>
    <location>
        <position position="4808"/>
    </location>
</feature>
<feature type="sequence variant" id="VAR_072055" description="In USH2A; uncertain significance." evidence="39">
    <original>G</original>
    <variation>R</variation>
    <location>
        <position position="4817"/>
    </location>
</feature>
<feature type="sequence variant" id="VAR_054619" description="In USH2A; dbSNP:rs143344549." evidence="29">
    <original>P</original>
    <variation>L</variation>
    <location>
        <position position="4818"/>
    </location>
</feature>
<feature type="sequence variant" id="VAR_061352" description="In dbSNP:rs41315587." evidence="36 39">
    <original>G</original>
    <variation>E</variation>
    <location>
        <position position="4838"/>
    </location>
</feature>
<feature type="sequence variant" id="VAR_072056" description="In RP39; uncertain significance; dbSNP:rs143275144." evidence="39">
    <original>L</original>
    <variation>P</variation>
    <location>
        <position position="4840"/>
    </location>
</feature>
<feature type="sequence variant" id="VAR_072057" description="In RP39; uncertain significance; dbSNP:rs200570742." evidence="39">
    <original>T</original>
    <variation>M</variation>
    <location>
        <position position="4844"/>
    </location>
</feature>
<feature type="sequence variant" id="VAR_072058" description="In dbSNP:rs77211159." evidence="36 39">
    <original>R</original>
    <variation>Q</variation>
    <location>
        <position position="4848"/>
    </location>
</feature>
<feature type="sequence variant" id="VAR_072059" description="In dbSNP:rs200949691." evidence="41">
    <original>S</original>
    <variation>T</variation>
    <location>
        <position position="4881"/>
    </location>
</feature>
<feature type="sequence variant" id="VAR_072060" description="In USH2A; uncertain significance; dbSNP:rs56136489." evidence="39">
    <original>T</original>
    <variation>M</variation>
    <location>
        <position position="4918"/>
    </location>
</feature>
<feature type="sequence variant" id="VAR_072061" description="In dbSNP:rs754834155." evidence="44">
    <original>E</original>
    <variation>K</variation>
    <location>
        <position position="4921"/>
    </location>
</feature>
<feature type="sequence variant" id="VAR_072062" description="In dbSNP:rs41308435." evidence="36 39">
    <original>K</original>
    <variation>E</variation>
    <location>
        <position position="5026"/>
    </location>
</feature>
<feature type="sequence variant" id="VAR_054620" description="In dbSNP:rs56038610." evidence="32">
    <original>R</original>
    <variation>W</variation>
    <location>
        <position position="5031"/>
    </location>
</feature>
<feature type="sequence variant" id="VAR_072063" description="In RP39." evidence="47">
    <original>L</original>
    <variation>R</variation>
    <location>
        <position position="5063"/>
    </location>
</feature>
<feature type="sequence variant" id="VAR_072064" description="In USH2A; likely benign; dbSNP:rs145771342." evidence="46">
    <original>R</original>
    <variation>C</variation>
    <location>
        <position position="5143"/>
    </location>
</feature>
<feature type="sequence variant" id="VAR_072065" description="In RP39; benign; dbSNP:rs111033435." evidence="39">
    <original>R</original>
    <variation>H</variation>
    <location>
        <position position="5143"/>
    </location>
</feature>
<feature type="sequence variant" id="VAR_072066" description="In RP39; benign; dbSNP:rs111033269." evidence="39">
    <original>V</original>
    <variation>I</variation>
    <location>
        <position position="5145"/>
    </location>
</feature>
<feature type="sequence variant" id="VAR_072067" description="In RP39; benign; dbSNP:rs58257972." evidence="39">
    <original>S</original>
    <variation>G</variation>
    <location>
        <position position="5188"/>
    </location>
</feature>
<feature type="sequence conflict" description="In Ref. 1; AAC23748 and 2; AAF75819." evidence="53" ref="1 2">
    <original>F</original>
    <variation>C</variation>
    <location>
        <position position="237"/>
    </location>
</feature>
<sequence length="5202" mass="575600">MNCPVLSLGSGFLFQVIEMLIFAYFASISLTESRGLFPRLENVGAFKKVSIVPTQAVCGLPDRSTFCHSSAAAESIQFCTQRFCIQDCPYRSSHPTYTALFSAGLSSCITPDKNDLHPNAHSNSASFIFGNHKSCFSSPPSPKLMASFTLAVWLKPEQQGVMCVIEKTVDGQIVFKLTISEKETMFYYRTVNGLQPPIKVMTLGRILVKKWIHLSVQVHQTKISFFINGVEKDHTPFNARTLSGSITDFASGTVQIGQSLNGLEQFVGRMQDFRLYQVALTNREILEVFSGDLLRLHAQSHCRCPGSHPRVHPLAQRYCIPNDAGDTADNRVSRLNPEAHPLSFVNDNDVGTSWVSNVFTNITQLNQGVTISVDLENGQYQVFYIIIQFFSPQPTEIRIQRKKENSLDWEDWQYFARNCGAFGMKNNGDLEKPDSVNCLQLSNFTPYSRGNVTFSILTPGPNYRPGYNNFYNTPSLQEFVKATQIRFHFHGQYYTTETAVNLRHRYYAVDEITISGRCQCHGHADNCDTTSQPYRCLCSQESFTEGLHCDRCLPLYNDKPFRQGDQVYAFNCKPCQCNSHSKSCHYNISVDPFPFEHFRGGGGVCDDCEHNTTGRNCELCKDYFFRQVGADPSAIDVCKPCDCDTVGTRNGSILCDQIGGQCNCKRHVSGRQCNQCQNGFYNLQELDPDGCSPCNCNTSGTVDGDITCHQNSGQCKCKANVIGLRCDHCNFGFKFLRSFNDVGCEPCQCNLHGSVNKFCNPHSGQCECKKEAKGLQCDTCRENFYGLDVTNCKACDCDTAGSLPGTVCNAKTGQCICKPNVEGRQCNKCLEGNFYLRQNNSFLCLPCNCDKTGTINGSLLCNKSTGQCPCKLGVTGLRCNQCEPHRYNLTIDNFQHCQMCECDSLGTLPGTICDPISGQCLCVPNRQGRRCNQCQPGFYISPGNATGCLPCSCHTTGAVNHICNSLTGQCVCQDASIAGQRCDQCKDHYFGFDPQTGRCQPCNCHLSGALNETCHLVTGQCFCKQFVTGSKCDACVPSASHLDVNNLLGCSKTPFQQPPPRGQVQSSSAINLSWSPPDSPNAHWLTYSLLRDGFEIYTTEDQYPYSIQYFLDTDLLPYTKYSYYIETTNVHGSTRSVAVTYKTKPGVPEGNLTLSYIIPIGSDSVTLTWTTLSNQSGPIEKYILSCAPLAGGQPCVSYEGHETSATIWNLVPFAKYDFSVQACTSGGCLHSLPITVTTAQAPPQRLSPPKMQKISSTELHVEWSPPAELNGIIIRYELYMRRLRSTKETTSEESRVFQSSGWLSPHSFVESANENALKPPQTMTTITGLEPYTKYEFRVLAVNMAGSVSSAWVSERTGESAPVFMIPPSVFPLSSYSLNISWEKPADNVTRGKVVGYDINMLSEQSPQQSIPMAFSQLLHTAKSQELSYTVEGLKPYRIYEFTITLCNSVGCVTSASGAGQTLAAAPAQLRPPLVKGINSTTIHLRWFPPEELNGPSPIYQLERRESSLPALMTTMMKGIRFIGNGYCKFPSSTHPVNTDFTGIKASFRTKVPEGLIVFAASPGNQEEYFALQLKKGRLYFLFDPQGSPVEVTTTNDHGKQYSDGKWHEIIAIRHQAFGQITLDGIYTGSSAILNGSTVIGDNTGVFLGGLPRSYTILRKDPEIIQKGFVGCLKDVHFMKNYNPSAIWEPLDWQSSEEQINVYNSWEGCPASLNEGAQFLGAGFLELHPYMFHGGMNFEISFKFRTDQLNGLLLFVYNKDGPDFLAMELKSGILTFRLNTSLAFTQVDLLLGLSYCNGKWNKVIIKKEGSFISASVNGLMKHASESGDQPLVVNSPVYVGGIPQELLNSYQHLCLEQGFGGCMKDVKFTRGAVVNLASVSSGAVRVNLDGCLSTDSAVNCRGNDSILVYQGKEQSVYEGGLQPFTEYLYRVIASHEGGSVYSDWSRGRTTGAAPQSVPTPSRVRSLNGYSIEVTWDEPVVRGVIEKYILKAYSEDSTRPPRMPSASAEFVNTSNLTGILTGLLPFKNYAVTLTACTLAGCTESSHALNISTPQEAPQEVQPPVAKSLPSSLLLSWNPPKKANGIITQYCLYMDGRLIYSGSEENYIVTDLAVFTPHQFLLSACTHVGCTNSSWVLLYTAQLPPEHVDSPVLTVLDSRTIHIQWKQPRKISGILERYVLYMSNHTHDFTIWSVIYNSTELFQDHMLQYVLPGNKYLIKLGACTGGGCTVSEASEALTDEDIPEGVPAPKAHSYSPDSFNVSWTEPEYPNGVITSYGLYLDGILIHNSSELSYRAYGFAPWSLHSFRVQACTAKGCALGPLVENRTLEAPPEGTVNVFVKTQGSRKAHVRWEAPFRPNGLLTHSVLFTGIFYVDPVGNNYTLLNVTKVMYSGEETNLWVLIDGLVPFTNYTVQVNISNSQGSLITDPITIAMPPGAPDGVLPPRLSSATPTSLQVVWSTPARNNAPGSPRYQLQMRSGDSTHGFLELFSNPSASLSYEVSDLQPYTEYMFRLVASNGFGSAHSSWIPFMTAEDKPGPVVPPILLDVKSRMMLVTWQHPRKSNGVITHYNIYLHGRLYLRTPGNVTNCTVMHLHPYTAYKFQVEACTSKGCSLSPESQTVWTLPGAPEGIPSPELFSDTPTSVIISWQPPTHPNGLVENFTIERRVKGKEEVTTLVTLPRSHSMRFIDKTSALSPWTKYEYRVLMSTLHGGTNSSAWVEVTTRPSRPAGVQPPVVTVLEPDAVQVTWKPPLIQNGDILSYEIHMPDPHITLTNVTSAVLSQKVTHLIPFTNYSVTIVACSGGNGYLGGCTESLPTYVTTHPTVPQNVGPLSVIPLSESYVVISWQPPSKPNGPNLRYELLRRKIQQPLASNPPEDLNRWHNIYSGTQWLYEDKGLSRFTTYEYMLFVHNSVGFTPSREVTVTTLAGLPERGANLTASVLNHTAIDVRWAKPTVQDLQGEVEYYTLFWSSATSNDSLKILPDVNSHVIGHLKPNTEYWIFISVFNGVHSINSAGLHATTCDGEPQGMLPPEVVIINSTAVRVIWTSPSNPNGVVTEYSIYVNNKLYKTGMNVPGSFILRDLSPFTIYDIQVEVCTIYACVKSNGTQITTVEDTPSDIPTPTIRGITSRSLQIDWVSPRKPNGIILGYDLLWKTWYPCAKTQKLVQDQSDELCKAVRCQKPESICGHICYSSEAKVCCNGVLYNPKPGHRCCEEKYIPFVLNSTGVCCGGRIQEAQPNHQCCSGYYARILPGEVCCPDEQHNRVSVGIGDSCCGRMPYSTSGNQICCAGRLHDGHGQKCCGRQIVSNDLECCGGEEGVVYNRLPGMFCCGQDYVNMSDTICCSASSGESKAHIKKNDPVPVKCCETELIPKSQKCCNGVGYNPLKYVCSDKISTGMMMKETKECRILCPASMEATEHCGRCDFNFTSHICTVIRGSHNSTGKASIEEMCSSAEETIHTGSVNTYSYTDVNLKPYMTYEYRISAWNSYGRGLSKAVRARTKEDVPQGVSPPTWTKIDNLEDTIVLNWRKPIQSNGPIIYYILLRNGIERFRGTSLSFSDKEGIQPFQEYSYQLKACTVAGCATSSKVVAATTQGVPESILPPSITALSAVALHLSWSVPEKSNGVIKEYQIRQVGKGLIHTDTTDRRQHTVTGLQPYTNYSFTLTACTSAGCTSSEPFLGQTLQAAPEGVWVTPRHIIINSTTVELYWSLPEKPNGLVSQYQLSRNGNLLFLGGSEEQNFTDKNLEPNSRYTYKLEVKTGGGSSASDDYIVQTPMSTPEEIYPPYNITVIGPYSIFVAWIPPGILIPEIPVEYNVLLNDGSVTPLAFSVGHHQSTLLENLTPFTQYEIRIQACQNGSCGVSSRMFVKTPEAAPMDLNSPVLKALGSACIEIKWMPPEKPNGIIINYFIYRRPAGIEEESVLFVWSEGALEFMDEGDTLRPFTLYEYRVRACNSKGSVESLWSLTQTLEAPPQDFPAPWAQATSAHSVLLNWTKPESPNGIISHYRVVYQERPDDPTFNSPTVHAFTVKGTSHQAHLYGLEPFTTYRIGVVAANHAGEILSPWTLIQTLESSPSGLRNFIVEQKENGRALLLQWSEPMRTNGVIKTYNIFSDGFLEYSGLNRQFLFRRLDPFTLYTLTLEACTRAGCAHSAPQPLWTDEAPPDSQLAPTVHSVKSTSVELSWSEPVNPNGKIIRYEVIRRCFEGKAWGNQTIQADEKIVFTEYNTERNTFMYNDTGLQPWTQCEYKIYTWNSAGHTCSSWNVVRTLQAPPEGLSPPVISYVSMNPQKLLISWIPPEQSNGIIQSYRLQRNEMLYPFSFDPVTFNYTDEELLPFSTYSYALQACTSGGCSTSKPTSITTLEAAPSEVSPPDLWAVSATQMNVCWSPPTVQNGKITKYLVRYDNKESLAGQGLCLLVSHLQPYSQYNFSLVACTNGGCTASVSKSAWTMEALPENMDSPTLQVTGSESIEITWKPPRNPNGQIRSYELRRDGTIVYTGLETRYRDFTLTPGVEYSYTVTASNSQGGILSPLVKDRTSPSAPSGMEPPKLQARGPQEILVNWDPPVRTNGDIINYTLFIRELFERETKIIHINTTHNSFGMQSYIVNQLKPFHRYEIRIQACTTLGCASSDWTFIQTPEIAPLMQPPPHLEVQMAPGGFQPTVSLLWTGPLQPNGKVLYYELYRRQIATQPRKSNPVLIYNGSSTSFIDSELLPFTEYEYQVWAVNSAGKAPSSWTWCRTGPAPPEGLRAPTFHVISSTQAVVNISAPGKPNGIVSLYRLFSSSAHGAETVLSEGMATQQTLHGLQAFTNYSIGVEACTCFNCCSKGPTAELRTHPAPPSGLSSPQIGTLASRTASFRWSPPMFPNGVIHSYELQFHVACPPDSALPCTPSQIETKYTGLGQKASLGGLQPYTTYKLRVVAHNEVGSTASEWISFTTQKELPQYRAPFSVDSNLSVVCVNWSDTFLLNGQLKEYVLTDGGRRVYSGLDTTLYIPRTADKTFFFQVICTTDEGSVKTPLIQYDTSTGLGLVLTTPGKKKGSRSKSTEFYSELWFIVLMAMLGLILLAIFLSLILQRKIHKEPYIRERPPLVPLQKRMSPLNVYPPGENHMGLADTKIPRSGTPVSIRSNRSACVLRIPSQNQTSLTYSQGSLHRSVSQLMDIQDKKVLMDNSLWEAIMGHNSGLYVDEEDLMNAIKDFSSVTKERTTFTDTHL</sequence>
<name>USH2A_HUMAN</name>
<accession>O75445</accession>
<accession>Q5VVM9</accession>
<accession>Q6S362</accession>
<accession>Q9NS27</accession>
<evidence type="ECO:0000250" key="1"/>
<evidence type="ECO:0000250" key="2">
    <source>
        <dbReference type="UniProtKB" id="Q2QI47"/>
    </source>
</evidence>
<evidence type="ECO:0000255" key="3"/>
<evidence type="ECO:0000255" key="4">
    <source>
        <dbReference type="PROSITE-ProRule" id="PRU00122"/>
    </source>
</evidence>
<evidence type="ECO:0000255" key="5">
    <source>
        <dbReference type="PROSITE-ProRule" id="PRU00316"/>
    </source>
</evidence>
<evidence type="ECO:0000255" key="6">
    <source>
        <dbReference type="PROSITE-ProRule" id="PRU00460"/>
    </source>
</evidence>
<evidence type="ECO:0000255" key="7">
    <source>
        <dbReference type="PROSITE-ProRule" id="PRU00466"/>
    </source>
</evidence>
<evidence type="ECO:0000256" key="8">
    <source>
        <dbReference type="SAM" id="MobiDB-lite"/>
    </source>
</evidence>
<evidence type="ECO:0000269" key="9">
    <source>
    </source>
</evidence>
<evidence type="ECO:0000269" key="10">
    <source>
    </source>
</evidence>
<evidence type="ECO:0000269" key="11">
    <source>
    </source>
</evidence>
<evidence type="ECO:0000269" key="12">
    <source>
    </source>
</evidence>
<evidence type="ECO:0000269" key="13">
    <source>
    </source>
</evidence>
<evidence type="ECO:0000269" key="14">
    <source>
    </source>
</evidence>
<evidence type="ECO:0000269" key="15">
    <source>
    </source>
</evidence>
<evidence type="ECO:0000269" key="16">
    <source>
    </source>
</evidence>
<evidence type="ECO:0000269" key="17">
    <source>
    </source>
</evidence>
<evidence type="ECO:0000269" key="18">
    <source>
    </source>
</evidence>
<evidence type="ECO:0000269" key="19">
    <source>
    </source>
</evidence>
<evidence type="ECO:0000269" key="20">
    <source>
    </source>
</evidence>
<evidence type="ECO:0000269" key="21">
    <source>
    </source>
</evidence>
<evidence type="ECO:0000269" key="22">
    <source>
    </source>
</evidence>
<evidence type="ECO:0000269" key="23">
    <source>
    </source>
</evidence>
<evidence type="ECO:0000269" key="24">
    <source>
    </source>
</evidence>
<evidence type="ECO:0000269" key="25">
    <source>
    </source>
</evidence>
<evidence type="ECO:0000269" key="26">
    <source>
    </source>
</evidence>
<evidence type="ECO:0000269" key="27">
    <source>
    </source>
</evidence>
<evidence type="ECO:0000269" key="28">
    <source>
    </source>
</evidence>
<evidence type="ECO:0000269" key="29">
    <source>
    </source>
</evidence>
<evidence type="ECO:0000269" key="30">
    <source>
    </source>
</evidence>
<evidence type="ECO:0000269" key="31">
    <source>
    </source>
</evidence>
<evidence type="ECO:0000269" key="32">
    <source>
    </source>
</evidence>
<evidence type="ECO:0000269" key="33">
    <source>
    </source>
</evidence>
<evidence type="ECO:0000269" key="34">
    <source>
    </source>
</evidence>
<evidence type="ECO:0000269" key="35">
    <source>
    </source>
</evidence>
<evidence type="ECO:0000269" key="36">
    <source>
    </source>
</evidence>
<evidence type="ECO:0000269" key="37">
    <source>
    </source>
</evidence>
<evidence type="ECO:0000269" key="38">
    <source>
    </source>
</evidence>
<evidence type="ECO:0000269" key="39">
    <source>
    </source>
</evidence>
<evidence type="ECO:0000269" key="40">
    <source>
    </source>
</evidence>
<evidence type="ECO:0000269" key="41">
    <source>
    </source>
</evidence>
<evidence type="ECO:0000269" key="42">
    <source>
    </source>
</evidence>
<evidence type="ECO:0000269" key="43">
    <source>
    </source>
</evidence>
<evidence type="ECO:0000269" key="44">
    <source>
    </source>
</evidence>
<evidence type="ECO:0000269" key="45">
    <source>
    </source>
</evidence>
<evidence type="ECO:0000269" key="46">
    <source>
    </source>
</evidence>
<evidence type="ECO:0000269" key="47">
    <source>
    </source>
</evidence>
<evidence type="ECO:0000269" key="48">
    <source>
    </source>
</evidence>
<evidence type="ECO:0000269" key="49">
    <source>
    </source>
</evidence>
<evidence type="ECO:0000269" key="50">
    <source>
    </source>
</evidence>
<evidence type="ECO:0000269" key="51">
    <source>
    </source>
</evidence>
<evidence type="ECO:0000303" key="52">
    <source>
    </source>
</evidence>
<evidence type="ECO:0000305" key="53"/>